<reference key="1">
    <citation type="journal article" date="1984" name="J. Biol. Chem.">
        <title>Sequences of the malE gene and of its product, the maltose-binding protein of Escherichia coli K12.</title>
        <authorList>
            <person name="Duplay P."/>
            <person name="Bedouelle H."/>
            <person name="Fowler A."/>
            <person name="Zabin I."/>
            <person name="Saurin W."/>
            <person name="Hofnung M."/>
        </authorList>
    </citation>
    <scope>NUCLEOTIDE SEQUENCE [GENOMIC DNA]</scope>
    <scope>PARTIAL PROTEIN SEQUENCE</scope>
    <source>
        <strain>K12</strain>
    </source>
</reference>
<reference key="2">
    <citation type="journal article" date="1993" name="Nucleic Acids Res.">
        <title>Analysis of the Escherichia coli genome. IV. DNA sequence of the region from 89.2 to 92.8 minutes.</title>
        <authorList>
            <person name="Blattner F.R."/>
            <person name="Burland V.D."/>
            <person name="Plunkett G. III"/>
            <person name="Sofia H.J."/>
            <person name="Daniels D.L."/>
        </authorList>
    </citation>
    <scope>NUCLEOTIDE SEQUENCE [LARGE SCALE GENOMIC DNA]</scope>
    <source>
        <strain>K12 / MG1655 / ATCC 47076</strain>
    </source>
</reference>
<reference key="3">
    <citation type="journal article" date="1997" name="Science">
        <title>The complete genome sequence of Escherichia coli K-12.</title>
        <authorList>
            <person name="Blattner F.R."/>
            <person name="Plunkett G. III"/>
            <person name="Bloch C.A."/>
            <person name="Perna N.T."/>
            <person name="Burland V."/>
            <person name="Riley M."/>
            <person name="Collado-Vides J."/>
            <person name="Glasner J.D."/>
            <person name="Rode C.K."/>
            <person name="Mayhew G.F."/>
            <person name="Gregor J."/>
            <person name="Davis N.W."/>
            <person name="Kirkpatrick H.A."/>
            <person name="Goeden M.A."/>
            <person name="Rose D.J."/>
            <person name="Mau B."/>
            <person name="Shao Y."/>
        </authorList>
    </citation>
    <scope>NUCLEOTIDE SEQUENCE [LARGE SCALE GENOMIC DNA]</scope>
    <source>
        <strain>K12 / MG1655 / ATCC 47076</strain>
    </source>
</reference>
<reference key="4">
    <citation type="journal article" date="2006" name="Mol. Syst. Biol.">
        <title>Highly accurate genome sequences of Escherichia coli K-12 strains MG1655 and W3110.</title>
        <authorList>
            <person name="Hayashi K."/>
            <person name="Morooka N."/>
            <person name="Yamamoto Y."/>
            <person name="Fujita K."/>
            <person name="Isono K."/>
            <person name="Choi S."/>
            <person name="Ohtsubo E."/>
            <person name="Baba T."/>
            <person name="Wanner B.L."/>
            <person name="Mori H."/>
            <person name="Horiuchi T."/>
        </authorList>
    </citation>
    <scope>NUCLEOTIDE SEQUENCE [LARGE SCALE GENOMIC DNA]</scope>
    <source>
        <strain>K12 / W3110 / ATCC 27325 / DSM 5911</strain>
    </source>
</reference>
<reference key="5">
    <citation type="journal article" date="1982" name="Mol. Gen. Genet.">
        <title>A DNA sequence containing the control regions of the malEFG and malK-lamB operons in Escherichia coli K12.</title>
        <authorList>
            <person name="Bedouelle H."/>
            <person name="Hofnung M."/>
        </authorList>
    </citation>
    <scope>NUCLEOTIDE SEQUENCE [GENOMIC DNA] OF 1-48</scope>
</reference>
<reference key="6">
    <citation type="journal article" date="1982" name="J. Mol. Biol.">
        <title>Promoters of the malEFG and malK-lamB operons in Escherichia coli K12.</title>
        <authorList>
            <person name="Bedouelle H."/>
            <person name="Schmeissner U."/>
            <person name="Hofnung M."/>
            <person name="Rosenberg M."/>
        </authorList>
    </citation>
    <scope>NUCLEOTIDE SEQUENCE [GENOMIC DNA] OF 1-32</scope>
</reference>
<reference key="7">
    <citation type="journal article" date="1984" name="J. Biol. Chem.">
        <title>The nucleotide sequence of the gene for malF protein, an inner membrane component of the maltose transport system of Escherichia coli. Repeated DNA sequences are found in the malE-malF intercistronic region.</title>
        <authorList>
            <person name="Froshauer S."/>
            <person name="Beckwith J."/>
        </authorList>
    </citation>
    <scope>NUCLEOTIDE SEQUENCE [GENOMIC DNA] OF 392-396</scope>
</reference>
<reference key="8">
    <citation type="journal article" date="1997" name="Electrophoresis">
        <title>Comparing the predicted and observed properties of proteins encoded in the genome of Escherichia coli K-12.</title>
        <authorList>
            <person name="Link A.J."/>
            <person name="Robison K."/>
            <person name="Church G.M."/>
        </authorList>
    </citation>
    <scope>PROTEIN SEQUENCE OF 27-38</scope>
    <source>
        <strain>K12 / EMG2</strain>
    </source>
</reference>
<reference key="9">
    <citation type="journal article" date="1998" name="J. Mol. Biol.">
        <title>Protein identification with N and C-terminal sequence tags in proteome projects.</title>
        <authorList>
            <person name="Wilkins M.R."/>
            <person name="Gasteiger E."/>
            <person name="Tonella L."/>
            <person name="Ou K."/>
            <person name="Tyler M."/>
            <person name="Sanchez J.-C."/>
            <person name="Gooley A.A."/>
            <person name="Walsh B.J."/>
            <person name="Bairoch A."/>
            <person name="Appel R.D."/>
            <person name="Williams K.L."/>
            <person name="Hochstrasser D.F."/>
        </authorList>
    </citation>
    <scope>PROTEIN SEQUENCE OF 27-30</scope>
    <source>
        <strain>K12 / W3110 / ATCC 27325 / DSM 5911</strain>
    </source>
</reference>
<reference key="10">
    <citation type="journal article" date="1974" name="Eur. J. Biochem.">
        <title>Active transport of maltose in Escherichia coli K12. Involvement of a 'periplasmic' maltose binding protein.</title>
        <authorList>
            <person name="Kellermann O."/>
            <person name="Szmelcman S."/>
        </authorList>
    </citation>
    <scope>FUNCTION</scope>
    <scope>SUBCELLULAR LOCATION</scope>
    <scope>INDUCTION</scope>
</reference>
<reference key="11">
    <citation type="journal article" date="1976" name="Eur. J. Biochem.">
        <title>Maltose transport in Escherichia coli K12. A comparison of transport kinetics in wild-type and lambda-resistant mutants as measured by fluorescence quenching.</title>
        <authorList>
            <person name="Szmelcman S."/>
            <person name="Schwartz M."/>
            <person name="Silhavy T.J."/>
            <person name="Boos W."/>
        </authorList>
    </citation>
    <scope>FUNCTION</scope>
    <scope>BIOPHYSICOCHEMICAL PROPERTIES</scope>
</reference>
<reference key="12">
    <citation type="journal article" date="1990" name="J. Biol. Chem.">
        <title>Overproduction, solubilization, and reconstitution of the maltose transport system from Escherichia coli.</title>
        <authorList>
            <person name="Davidson A.L."/>
            <person name="Nikaido H."/>
        </authorList>
    </citation>
    <scope>FUNCTION</scope>
    <scope>SUBUNIT</scope>
    <source>
        <strain>K12</strain>
    </source>
</reference>
<reference key="13">
    <citation type="journal article" date="1991" name="J. Biol. Chem.">
        <title>Purification and characterization of the membrane-associated components of the maltose transport system from Escherichia coli.</title>
        <authorList>
            <person name="Davidson A.L."/>
            <person name="Nikaido H."/>
        </authorList>
    </citation>
    <scope>FUNCTION</scope>
    <scope>SUBUNIT</scope>
</reference>
<reference key="14">
    <citation type="journal article" date="1997" name="Electrophoresis">
        <title>Escherichia coli proteome analysis using the gene-protein database.</title>
        <authorList>
            <person name="VanBogelen R.A."/>
            <person name="Abshire K.Z."/>
            <person name="Moldover B."/>
            <person name="Olson E.R."/>
            <person name="Neidhardt F.C."/>
        </authorList>
    </citation>
    <scope>IDENTIFICATION BY 2D-GEL</scope>
</reference>
<reference key="15">
    <citation type="journal article" date="2003" name="Res. Microbiol.">
        <title>Changes in Escherichia coli transcriptome during acclimatization at low temperature.</title>
        <authorList>
            <person name="Polissi A."/>
            <person name="De Laurentis W."/>
            <person name="Zangrossi S."/>
            <person name="Briani F."/>
            <person name="Longhi V."/>
            <person name="Pesole G."/>
            <person name="Deho G."/>
        </authorList>
    </citation>
    <scope>INDUCTION</scope>
    <source>
        <strain>K12 / MG1655 / ATCC 47076</strain>
    </source>
</reference>
<reference key="16">
    <citation type="journal article" date="1991" name="J. Biol. Chem.">
        <title>The 2.3-A resolution structure of the maltose- or maltodextrin-binding protein, a primary receptor of bacterial active transport and chemotaxis.</title>
        <authorList>
            <person name="Spurlino J.C."/>
            <person name="Lu G.-Y."/>
            <person name="Quiocho F.A."/>
        </authorList>
    </citation>
    <scope>X-RAY CRYSTALLOGRAPHY (2.3 ANGSTROMS)</scope>
</reference>
<reference key="17">
    <citation type="journal article" date="1992" name="Biochemistry">
        <title>Crystallographic evidence of a large ligand-induced hinge-twist motion between the two domains of the maltodextrin binding protein involved in active transport and chemotaxis.</title>
        <authorList>
            <person name="Sharff A.J."/>
            <person name="Rodseth L.E."/>
            <person name="Spurlino J.C."/>
            <person name="Quiocho F.A."/>
        </authorList>
    </citation>
    <scope>X-RAY CRYSTALLOGRAPHY (1.8 ANGSTROMS)</scope>
</reference>
<reference key="18">
    <citation type="journal article" date="1997" name="Structure">
        <title>Extensive features of tight oligosaccharide binding revealed in high-resolution structures of the maltodextrin transport/chemosensory receptor.</title>
        <authorList>
            <person name="Quiocho F.A."/>
            <person name="Spurlino J.C."/>
            <person name="Rodseth L.E."/>
        </authorList>
    </citation>
    <scope>X-RAY CRYSTALLOGRAPHY (1.7 ANGSTROMS)</scope>
</reference>
<reference key="19">
    <citation type="journal article" date="2008" name="Proc. Natl. Acad. Sci. U.S.A.">
        <title>Redirecting the substrate specificity of heparan sulfate 2-O-sulfotransferase by structurally guided mutagenesis.</title>
        <authorList>
            <person name="Bethea H.N."/>
            <person name="Xu D."/>
            <person name="Liu J."/>
            <person name="Pedersen L.C."/>
        </authorList>
    </citation>
    <scope>X-RAY CRYSTALLOGRAPHY (2.65 ANGSTROMS) OF 27-392 IN COMPLEX WITH CHICKEN HS2ST1</scope>
</reference>
<name>MALE_ECOLI</name>
<feature type="signal peptide" evidence="6 7">
    <location>
        <begin position="1"/>
        <end position="26"/>
    </location>
</feature>
<feature type="chain" id="PRO_0000031694" description="Maltose/maltodextrin-binding periplasmic protein">
    <location>
        <begin position="27"/>
        <end position="396"/>
    </location>
</feature>
<feature type="sequence conflict" description="In Ref. 8; AA sequence." evidence="10" ref="8">
    <original>W</original>
    <variation>A</variation>
    <location>
        <position position="36"/>
    </location>
</feature>
<feature type="sequence conflict" description="In Ref. 5; CAA23581." evidence="10" ref="5">
    <original>L</original>
    <variation>H</variation>
    <location>
        <position position="46"/>
    </location>
</feature>
<feature type="turn" evidence="17">
    <location>
        <begin position="28"/>
        <end position="31"/>
    </location>
</feature>
<feature type="strand" evidence="23">
    <location>
        <begin position="32"/>
        <end position="36"/>
    </location>
</feature>
<feature type="helix" evidence="21">
    <location>
        <begin position="39"/>
        <end position="41"/>
    </location>
</feature>
<feature type="helix" evidence="23">
    <location>
        <begin position="43"/>
        <end position="57"/>
    </location>
</feature>
<feature type="strand" evidence="23">
    <location>
        <begin position="61"/>
        <end position="64"/>
    </location>
</feature>
<feature type="helix" evidence="23">
    <location>
        <begin position="69"/>
        <end position="77"/>
    </location>
</feature>
<feature type="turn" evidence="23">
    <location>
        <begin position="78"/>
        <end position="80"/>
    </location>
</feature>
<feature type="strand" evidence="23">
    <location>
        <begin position="84"/>
        <end position="89"/>
    </location>
</feature>
<feature type="helix" evidence="23">
    <location>
        <begin position="90"/>
        <end position="98"/>
    </location>
</feature>
<feature type="strand" evidence="13">
    <location>
        <begin position="99"/>
        <end position="101"/>
    </location>
</feature>
<feature type="helix" evidence="23">
    <location>
        <begin position="109"/>
        <end position="112"/>
    </location>
</feature>
<feature type="helix" evidence="23">
    <location>
        <begin position="117"/>
        <end position="122"/>
    </location>
</feature>
<feature type="strand" evidence="11">
    <location>
        <begin position="123"/>
        <end position="125"/>
    </location>
</feature>
<feature type="strand" evidence="22">
    <location>
        <begin position="126"/>
        <end position="129"/>
    </location>
</feature>
<feature type="strand" evidence="23">
    <location>
        <begin position="131"/>
        <end position="137"/>
    </location>
</feature>
<feature type="strand" evidence="23">
    <location>
        <begin position="140"/>
        <end position="144"/>
    </location>
</feature>
<feature type="turn" evidence="23">
    <location>
        <begin position="145"/>
        <end position="147"/>
    </location>
</feature>
<feature type="strand" evidence="15">
    <location>
        <begin position="148"/>
        <end position="150"/>
    </location>
</feature>
<feature type="helix" evidence="23">
    <location>
        <begin position="155"/>
        <end position="157"/>
    </location>
</feature>
<feature type="helix" evidence="23">
    <location>
        <begin position="158"/>
        <end position="166"/>
    </location>
</feature>
<feature type="turn" evidence="23">
    <location>
        <begin position="167"/>
        <end position="169"/>
    </location>
</feature>
<feature type="strand" evidence="20">
    <location>
        <begin position="171"/>
        <end position="173"/>
    </location>
</feature>
<feature type="strand" evidence="18">
    <location>
        <begin position="177"/>
        <end position="179"/>
    </location>
</feature>
<feature type="helix" evidence="23">
    <location>
        <begin position="180"/>
        <end position="189"/>
    </location>
</feature>
<feature type="strand" evidence="23">
    <location>
        <begin position="193"/>
        <end position="198"/>
    </location>
</feature>
<feature type="strand" evidence="23">
    <location>
        <begin position="201"/>
        <end position="203"/>
    </location>
</feature>
<feature type="strand" evidence="23">
    <location>
        <begin position="208"/>
        <end position="211"/>
    </location>
</feature>
<feature type="helix" evidence="23">
    <location>
        <begin position="212"/>
        <end position="226"/>
    </location>
</feature>
<feature type="strand" evidence="16">
    <location>
        <begin position="227"/>
        <end position="230"/>
    </location>
</feature>
<feature type="helix" evidence="23">
    <location>
        <begin position="236"/>
        <end position="244"/>
    </location>
</feature>
<feature type="strand" evidence="23">
    <location>
        <begin position="247"/>
        <end position="253"/>
    </location>
</feature>
<feature type="helix" evidence="23">
    <location>
        <begin position="255"/>
        <end position="260"/>
    </location>
</feature>
<feature type="turn" evidence="23">
    <location>
        <begin position="263"/>
        <end position="265"/>
    </location>
</feature>
<feature type="strand" evidence="23">
    <location>
        <begin position="268"/>
        <end position="271"/>
    </location>
</feature>
<feature type="strand" evidence="16">
    <location>
        <begin position="275"/>
        <end position="279"/>
    </location>
</feature>
<feature type="strand" evidence="23">
    <location>
        <begin position="284"/>
        <end position="293"/>
    </location>
</feature>
<feature type="strand" evidence="12">
    <location>
        <begin position="294"/>
        <end position="297"/>
    </location>
</feature>
<feature type="helix" evidence="23">
    <location>
        <begin position="299"/>
        <end position="308"/>
    </location>
</feature>
<feature type="turn" evidence="19">
    <location>
        <begin position="309"/>
        <end position="311"/>
    </location>
</feature>
<feature type="helix" evidence="23">
    <location>
        <begin position="313"/>
        <end position="322"/>
    </location>
</feature>
<feature type="strand" evidence="14">
    <location>
        <begin position="323"/>
        <end position="325"/>
    </location>
</feature>
<feature type="strand" evidence="23">
    <location>
        <begin position="326"/>
        <end position="330"/>
    </location>
</feature>
<feature type="helix" evidence="23">
    <location>
        <begin position="331"/>
        <end position="337"/>
    </location>
</feature>
<feature type="strand" evidence="15">
    <location>
        <begin position="338"/>
        <end position="340"/>
    </location>
</feature>
<feature type="helix" evidence="23">
    <location>
        <begin position="341"/>
        <end position="352"/>
    </location>
</feature>
<feature type="strand" evidence="23">
    <location>
        <begin position="353"/>
        <end position="355"/>
    </location>
</feature>
<feature type="helix" evidence="23">
    <location>
        <begin position="362"/>
        <end position="378"/>
    </location>
</feature>
<feature type="strand" evidence="23">
    <location>
        <begin position="379"/>
        <end position="381"/>
    </location>
</feature>
<feature type="helix" evidence="23">
    <location>
        <begin position="383"/>
        <end position="394"/>
    </location>
</feature>
<protein>
    <recommendedName>
        <fullName evidence="10">Maltose/maltodextrin-binding periplasmic protein</fullName>
    </recommendedName>
    <alternativeName>
        <fullName evidence="10">MMBP</fullName>
    </alternativeName>
    <alternativeName>
        <fullName evidence="10">Maltodextrin-binding protein</fullName>
    </alternativeName>
    <alternativeName>
        <fullName evidence="8">Maltose-binding protein</fullName>
        <shortName evidence="9">MBP</shortName>
    </alternativeName>
</protein>
<organism>
    <name type="scientific">Escherichia coli (strain K12)</name>
    <dbReference type="NCBI Taxonomy" id="83333"/>
    <lineage>
        <taxon>Bacteria</taxon>
        <taxon>Pseudomonadati</taxon>
        <taxon>Pseudomonadota</taxon>
        <taxon>Gammaproteobacteria</taxon>
        <taxon>Enterobacterales</taxon>
        <taxon>Enterobacteriaceae</taxon>
        <taxon>Escherichia</taxon>
    </lineage>
</organism>
<proteinExistence type="evidence at protein level"/>
<sequence length="396" mass="43388">MKIKTGARILALSALTTMMFSASALAKIEEGKLVIWINGDKGYNGLAEVGKKFEKDTGIKVTVEHPDKLEEKFPQVAATGDGPDIIFWAHDRFGGYAQSGLLAEITPDKAFQDKLYPFTWDAVRYNGKLIAYPIAVEALSLIYNKDLLPNPPKTWEEIPALDKELKAKGKSALMFNLQEPYFTWPLIAADGGYAFKYENGKYDIKDVGVDNAGAKAGLTFLVDLIKNKHMNADTDYSIAEAAFNKGETAMTINGPWAWSNIDTSKVNYGVTVLPTFKGQPSKPFVGVLSAGINAASPNKELAKEFLENYLLTDEGLEAVNKDKPLGAVALKSYEEELAKDPRIAATMENAQKGEIMPNIPQMSAFWYAVRTAVINAASGRQTVDEALKDAQTRITK</sequence>
<keyword id="KW-0002">3D-structure</keyword>
<keyword id="KW-0903">Direct protein sequencing</keyword>
<keyword id="KW-0574">Periplasm</keyword>
<keyword id="KW-1185">Reference proteome</keyword>
<keyword id="KW-0732">Signal</keyword>
<keyword id="KW-0762">Sugar transport</keyword>
<keyword id="KW-0813">Transport</keyword>
<accession>P0AEX9</accession>
<accession>P02928</accession>
<accession>Q2M6S0</accession>
<gene>
    <name evidence="8" type="primary">malE</name>
    <name type="ordered locus">b4034</name>
    <name type="ordered locus">JW3994</name>
</gene>
<dbReference type="EMBL" id="V00303">
    <property type="protein sequence ID" value="CAA23581.1"/>
    <property type="molecule type" value="Genomic_DNA"/>
</dbReference>
<dbReference type="EMBL" id="U00006">
    <property type="protein sequence ID" value="AAC43128.1"/>
    <property type="molecule type" value="Genomic_DNA"/>
</dbReference>
<dbReference type="EMBL" id="U00096">
    <property type="protein sequence ID" value="AAC77004.1"/>
    <property type="molecule type" value="Genomic_DNA"/>
</dbReference>
<dbReference type="EMBL" id="AP009048">
    <property type="protein sequence ID" value="BAE78036.1"/>
    <property type="molecule type" value="Genomic_DNA"/>
</dbReference>
<dbReference type="EMBL" id="J01648">
    <property type="protein sequence ID" value="AAB59056.1"/>
    <property type="molecule type" value="Genomic_DNA"/>
</dbReference>
<dbReference type="EMBL" id="M16181">
    <property type="protein sequence ID" value="AAA24102.1"/>
    <property type="molecule type" value="Genomic_DNA"/>
</dbReference>
<dbReference type="EMBL" id="M12635">
    <property type="protein sequence ID" value="AAA24123.1"/>
    <property type="molecule type" value="Genomic_DNA"/>
</dbReference>
<dbReference type="EMBL" id="M12647">
    <property type="protein sequence ID" value="AAA24135.1"/>
    <property type="molecule type" value="Genomic_DNA"/>
</dbReference>
<dbReference type="EMBL" id="M12650">
    <property type="protein sequence ID" value="AAA24138.1"/>
    <property type="molecule type" value="Genomic_DNA"/>
</dbReference>
<dbReference type="EMBL" id="M12653">
    <property type="protein sequence ID" value="AAA24115.1"/>
    <property type="molecule type" value="Genomic_DNA"/>
</dbReference>
<dbReference type="PIR" id="A03428">
    <property type="entry name" value="JGECM"/>
</dbReference>
<dbReference type="RefSeq" id="NP_418458.1">
    <property type="nucleotide sequence ID" value="NC_000913.3"/>
</dbReference>
<dbReference type="RefSeq" id="WP_000695387.1">
    <property type="nucleotide sequence ID" value="NZ_STEB01000022.1"/>
</dbReference>
<dbReference type="PDB" id="1A7L">
    <property type="method" value="X-ray"/>
    <property type="resolution" value="2.90 A"/>
    <property type="chains" value="A/B/C=27-389"/>
</dbReference>
<dbReference type="PDB" id="1ANF">
    <property type="method" value="X-ray"/>
    <property type="resolution" value="1.67 A"/>
    <property type="chains" value="A=27-396"/>
</dbReference>
<dbReference type="PDB" id="1DMB">
    <property type="method" value="X-ray"/>
    <property type="resolution" value="1.80 A"/>
    <property type="chains" value="A=27-396"/>
</dbReference>
<dbReference type="PDB" id="1EZ9">
    <property type="method" value="X-ray"/>
    <property type="resolution" value="1.90 A"/>
    <property type="chains" value="A/B=27-396"/>
</dbReference>
<dbReference type="PDB" id="1EZO">
    <property type="method" value="NMR"/>
    <property type="chains" value="A=29-396"/>
</dbReference>
<dbReference type="PDB" id="1EZP">
    <property type="method" value="NMR"/>
    <property type="chains" value="A=29-396"/>
</dbReference>
<dbReference type="PDB" id="1FQA">
    <property type="method" value="X-ray"/>
    <property type="resolution" value="1.90 A"/>
    <property type="chains" value="A=28-396"/>
</dbReference>
<dbReference type="PDB" id="1FQB">
    <property type="method" value="X-ray"/>
    <property type="resolution" value="1.90 A"/>
    <property type="chains" value="A=28-396"/>
</dbReference>
<dbReference type="PDB" id="1FQC">
    <property type="method" value="X-ray"/>
    <property type="resolution" value="2.30 A"/>
    <property type="chains" value="A=28-396"/>
</dbReference>
<dbReference type="PDB" id="1FQD">
    <property type="method" value="X-ray"/>
    <property type="resolution" value="2.30 A"/>
    <property type="chains" value="A=28-396"/>
</dbReference>
<dbReference type="PDB" id="1HSJ">
    <property type="method" value="X-ray"/>
    <property type="resolution" value="2.30 A"/>
    <property type="chains" value="A/B=27-396"/>
</dbReference>
<dbReference type="PDB" id="1IUD">
    <property type="method" value="X-ray"/>
    <property type="resolution" value="2.70 A"/>
    <property type="chains" value="A=27-396"/>
</dbReference>
<dbReference type="PDB" id="1JVX">
    <property type="method" value="X-ray"/>
    <property type="resolution" value="2.50 A"/>
    <property type="chains" value="A=27-396"/>
</dbReference>
<dbReference type="PDB" id="1JVY">
    <property type="method" value="X-ray"/>
    <property type="resolution" value="1.90 A"/>
    <property type="chains" value="A=27-396"/>
</dbReference>
<dbReference type="PDB" id="1JW4">
    <property type="method" value="X-ray"/>
    <property type="resolution" value="2.00 A"/>
    <property type="chains" value="A=27-396"/>
</dbReference>
<dbReference type="PDB" id="1JW5">
    <property type="method" value="X-ray"/>
    <property type="resolution" value="2.00 A"/>
    <property type="chains" value="A=27-396"/>
</dbReference>
<dbReference type="PDB" id="1LAX">
    <property type="method" value="X-ray"/>
    <property type="resolution" value="1.85 A"/>
    <property type="chains" value="A/C=27-396"/>
</dbReference>
<dbReference type="PDB" id="1LLS">
    <property type="method" value="X-ray"/>
    <property type="resolution" value="1.80 A"/>
    <property type="chains" value="A=27-396"/>
</dbReference>
<dbReference type="PDB" id="1MDP">
    <property type="method" value="X-ray"/>
    <property type="resolution" value="2.30 A"/>
    <property type="chains" value="1/2=27-396"/>
</dbReference>
<dbReference type="PDB" id="1MDQ">
    <property type="method" value="X-ray"/>
    <property type="resolution" value="1.90 A"/>
    <property type="chains" value="A=27-396"/>
</dbReference>
<dbReference type="PDB" id="1MG1">
    <property type="method" value="X-ray"/>
    <property type="resolution" value="2.50 A"/>
    <property type="chains" value="A=31-392"/>
</dbReference>
<dbReference type="PDB" id="1MH3">
    <property type="method" value="X-ray"/>
    <property type="resolution" value="2.10 A"/>
    <property type="chains" value="A=27-392"/>
</dbReference>
<dbReference type="PDB" id="1MH4">
    <property type="method" value="X-ray"/>
    <property type="resolution" value="2.30 A"/>
    <property type="chains" value="A=27-392"/>
</dbReference>
<dbReference type="PDB" id="1MPB">
    <property type="method" value="X-ray"/>
    <property type="resolution" value="2.00 A"/>
    <property type="chains" value="A=27-396"/>
</dbReference>
<dbReference type="PDB" id="1MPC">
    <property type="method" value="X-ray"/>
    <property type="resolution" value="2.10 A"/>
    <property type="chains" value="A=27-396"/>
</dbReference>
<dbReference type="PDB" id="1MPD">
    <property type="method" value="X-ray"/>
    <property type="resolution" value="2.30 A"/>
    <property type="chains" value="A=27-396"/>
</dbReference>
<dbReference type="PDB" id="1N3W">
    <property type="method" value="X-ray"/>
    <property type="resolution" value="2.60 A"/>
    <property type="chains" value="A=27-396"/>
</dbReference>
<dbReference type="PDB" id="1N3X">
    <property type="method" value="X-ray"/>
    <property type="resolution" value="2.50 A"/>
    <property type="chains" value="A=27-396"/>
</dbReference>
<dbReference type="PDB" id="1NL5">
    <property type="method" value="X-ray"/>
    <property type="resolution" value="2.10 A"/>
    <property type="chains" value="A=27-396"/>
</dbReference>
<dbReference type="PDB" id="1NMU">
    <property type="method" value="X-ray"/>
    <property type="resolution" value="2.31 A"/>
    <property type="chains" value="A/C=27-392"/>
</dbReference>
<dbReference type="PDB" id="1OMP">
    <property type="method" value="X-ray"/>
    <property type="resolution" value="1.80 A"/>
    <property type="chains" value="A=27-396"/>
</dbReference>
<dbReference type="PDB" id="1PEB">
    <property type="method" value="X-ray"/>
    <property type="resolution" value="2.60 A"/>
    <property type="chains" value="A=27-396"/>
</dbReference>
<dbReference type="PDB" id="1R6Z">
    <property type="method" value="X-ray"/>
    <property type="resolution" value="2.80 A"/>
    <property type="chains" value="A/P/Z=27-392"/>
</dbReference>
<dbReference type="PDB" id="1SVX">
    <property type="method" value="X-ray"/>
    <property type="resolution" value="2.24 A"/>
    <property type="chains" value="B=29-392"/>
</dbReference>
<dbReference type="PDB" id="1T0K">
    <property type="method" value="X-ray"/>
    <property type="resolution" value="3.24 A"/>
    <property type="chains" value="A=29-392"/>
</dbReference>
<dbReference type="PDB" id="1Y4C">
    <property type="method" value="X-ray"/>
    <property type="resolution" value="1.90 A"/>
    <property type="chains" value="A=27-392"/>
</dbReference>
<dbReference type="PDB" id="1YTV">
    <property type="method" value="X-ray"/>
    <property type="resolution" value="1.80 A"/>
    <property type="chains" value="A/B=27-392"/>
</dbReference>
<dbReference type="PDB" id="1ZIU">
    <property type="method" value="X-ray"/>
    <property type="resolution" value="2.00 A"/>
    <property type="chains" value="A=27-396"/>
</dbReference>
<dbReference type="PDB" id="1ZJL">
    <property type="method" value="X-ray"/>
    <property type="resolution" value="2.00 A"/>
    <property type="chains" value="A=27-396"/>
</dbReference>
<dbReference type="PDB" id="1ZKB">
    <property type="method" value="X-ray"/>
    <property type="resolution" value="2.20 A"/>
    <property type="chains" value="A=27-396"/>
</dbReference>
<dbReference type="PDB" id="1ZMG">
    <property type="method" value="X-ray"/>
    <property type="resolution" value="2.50 A"/>
    <property type="chains" value="A=27-396"/>
</dbReference>
<dbReference type="PDB" id="2D21">
    <property type="method" value="NMR"/>
    <property type="chains" value="A=27-396"/>
</dbReference>
<dbReference type="PDB" id="2H25">
    <property type="method" value="NMR"/>
    <property type="chains" value="A=27-396"/>
</dbReference>
<dbReference type="PDB" id="2KLF">
    <property type="method" value="NMR"/>
    <property type="chains" value="A=27-396"/>
</dbReference>
<dbReference type="PDB" id="2MV0">
    <property type="method" value="NMR"/>
    <property type="chains" value="A=27-396"/>
</dbReference>
<dbReference type="PDB" id="2N44">
    <property type="method" value="NMR"/>
    <property type="chains" value="A=27-396"/>
</dbReference>
<dbReference type="PDB" id="2N45">
    <property type="method" value="NMR"/>
    <property type="chains" value="A=27-396"/>
</dbReference>
<dbReference type="PDB" id="2NVU">
    <property type="method" value="X-ray"/>
    <property type="resolution" value="2.80 A"/>
    <property type="chains" value="B=25-392"/>
</dbReference>
<dbReference type="PDB" id="2OBG">
    <property type="method" value="X-ray"/>
    <property type="resolution" value="2.35 A"/>
    <property type="chains" value="A=31-396"/>
</dbReference>
<dbReference type="PDB" id="2OK2">
    <property type="method" value="X-ray"/>
    <property type="resolution" value="2.00 A"/>
    <property type="chains" value="A/B=28-392"/>
</dbReference>
<dbReference type="PDB" id="2R6G">
    <property type="method" value="X-ray"/>
    <property type="resolution" value="2.80 A"/>
    <property type="chains" value="E=27-396"/>
</dbReference>
<dbReference type="PDB" id="2V93">
    <property type="method" value="NMR"/>
    <property type="chains" value="A=27-396"/>
</dbReference>
<dbReference type="PDB" id="2VGQ">
    <property type="method" value="X-ray"/>
    <property type="resolution" value="2.10 A"/>
    <property type="chains" value="A=27-392"/>
</dbReference>
<dbReference type="PDB" id="2XZ3">
    <property type="method" value="X-ray"/>
    <property type="resolution" value="1.95 A"/>
    <property type="chains" value="A=27-392"/>
</dbReference>
<dbReference type="PDB" id="2ZXT">
    <property type="method" value="X-ray"/>
    <property type="resolution" value="3.00 A"/>
    <property type="chains" value="A=27-392"/>
</dbReference>
<dbReference type="PDB" id="3A3C">
    <property type="method" value="X-ray"/>
    <property type="resolution" value="2.50 A"/>
    <property type="chains" value="A=29-392"/>
</dbReference>
<dbReference type="PDB" id="3C4M">
    <property type="method" value="X-ray"/>
    <property type="resolution" value="1.95 A"/>
    <property type="chains" value="A/B=26-392"/>
</dbReference>
<dbReference type="PDB" id="3CSB">
    <property type="method" value="X-ray"/>
    <property type="resolution" value="2.00 A"/>
    <property type="chains" value="A=31-396"/>
</dbReference>
<dbReference type="PDB" id="3CSG">
    <property type="method" value="X-ray"/>
    <property type="resolution" value="1.80 A"/>
    <property type="chains" value="A=31-396"/>
</dbReference>
<dbReference type="PDB" id="3D4C">
    <property type="method" value="X-ray"/>
    <property type="resolution" value="2.90 A"/>
    <property type="chains" value="A=27-393"/>
</dbReference>
<dbReference type="PDB" id="3D4G">
    <property type="method" value="X-ray"/>
    <property type="resolution" value="2.30 A"/>
    <property type="chains" value="A/B/C/D/E/F/G/H=27-393"/>
</dbReference>
<dbReference type="PDB" id="3DM0">
    <property type="method" value="X-ray"/>
    <property type="resolution" value="2.40 A"/>
    <property type="chains" value="A=27-387"/>
</dbReference>
<dbReference type="PDB" id="3EF7">
    <property type="method" value="X-ray"/>
    <property type="resolution" value="3.10 A"/>
    <property type="chains" value="A/B=27-393"/>
</dbReference>
<dbReference type="PDB" id="3EHS">
    <property type="method" value="X-ray"/>
    <property type="resolution" value="2.76 A"/>
    <property type="chains" value="A=26-392"/>
</dbReference>
<dbReference type="PDB" id="3EHT">
    <property type="method" value="X-ray"/>
    <property type="resolution" value="3.40 A"/>
    <property type="chains" value="A=26-392"/>
</dbReference>
<dbReference type="PDB" id="3EHU">
    <property type="method" value="X-ray"/>
    <property type="resolution" value="1.96 A"/>
    <property type="chains" value="A/B=26-392"/>
</dbReference>
<dbReference type="PDB" id="3F5F">
    <property type="method" value="X-ray"/>
    <property type="resolution" value="2.65 A"/>
    <property type="chains" value="A=27-387"/>
</dbReference>
<dbReference type="PDB" id="3G7V">
    <property type="method" value="X-ray"/>
    <property type="resolution" value="1.86 A"/>
    <property type="chains" value="A/B/C/D=27-392"/>
</dbReference>
<dbReference type="PDB" id="3G7W">
    <property type="method" value="X-ray"/>
    <property type="resolution" value="1.75 A"/>
    <property type="chains" value="A=27-392"/>
</dbReference>
<dbReference type="PDB" id="3H3G">
    <property type="method" value="X-ray"/>
    <property type="resolution" value="1.94 A"/>
    <property type="chains" value="A=26-392"/>
</dbReference>
<dbReference type="PDB" id="3H4Z">
    <property type="method" value="X-ray"/>
    <property type="resolution" value="2.35 A"/>
    <property type="chains" value="A/B/C=27-392"/>
</dbReference>
<dbReference type="PDB" id="3HPI">
    <property type="method" value="X-ray"/>
    <property type="resolution" value="2.00 A"/>
    <property type="chains" value="A/B=27-396"/>
</dbReference>
<dbReference type="PDB" id="3HST">
    <property type="method" value="X-ray"/>
    <property type="resolution" value="2.25 A"/>
    <property type="chains" value="A/C=27-392"/>
</dbReference>
<dbReference type="PDB" id="3IO4">
    <property type="method" value="X-ray"/>
    <property type="resolution" value="3.63 A"/>
    <property type="chains" value="A/B/C=27-384"/>
</dbReference>
<dbReference type="PDB" id="3IO6">
    <property type="method" value="X-ray"/>
    <property type="resolution" value="3.70 A"/>
    <property type="chains" value="A/B/C=27-384"/>
</dbReference>
<dbReference type="PDB" id="3IOR">
    <property type="method" value="X-ray"/>
    <property type="resolution" value="3.60 A"/>
    <property type="chains" value="A/B/C=27-384"/>
</dbReference>
<dbReference type="PDB" id="3IOT">
    <property type="method" value="X-ray"/>
    <property type="resolution" value="3.50 A"/>
    <property type="chains" value="A/B/C=27-384"/>
</dbReference>
<dbReference type="PDB" id="3IOU">
    <property type="method" value="X-ray"/>
    <property type="resolution" value="3.70 A"/>
    <property type="chains" value="A/B/C=27-384"/>
</dbReference>
<dbReference type="PDB" id="3IOV">
    <property type="method" value="X-ray"/>
    <property type="resolution" value="3.70 A"/>
    <property type="chains" value="A/B/C=27-384"/>
</dbReference>
<dbReference type="PDB" id="3IOW">
    <property type="method" value="X-ray"/>
    <property type="resolution" value="3.50 A"/>
    <property type="chains" value="A/B/C=27-384"/>
</dbReference>
<dbReference type="PDB" id="3J9P">
    <property type="method" value="EM"/>
    <property type="resolution" value="4.24 A"/>
    <property type="chains" value="A/B/C/D=27-392"/>
</dbReference>
<dbReference type="PDB" id="3KJT">
    <property type="method" value="X-ray"/>
    <property type="resolution" value="1.50 A"/>
    <property type="chains" value="A=27-396"/>
</dbReference>
<dbReference type="PDB" id="3L2J">
    <property type="method" value="X-ray"/>
    <property type="resolution" value="3.24 A"/>
    <property type="chains" value="A/B=29-392"/>
</dbReference>
<dbReference type="PDB" id="3LBS">
    <property type="method" value="X-ray"/>
    <property type="resolution" value="2.15 A"/>
    <property type="chains" value="A/B=29-390"/>
</dbReference>
<dbReference type="PDB" id="3LC8">
    <property type="method" value="X-ray"/>
    <property type="resolution" value="2.00 A"/>
    <property type="chains" value="A/B=29-390"/>
</dbReference>
<dbReference type="PDB" id="3MBP">
    <property type="method" value="X-ray"/>
    <property type="resolution" value="1.70 A"/>
    <property type="chains" value="A=27-396"/>
</dbReference>
<dbReference type="PDB" id="3MP1">
    <property type="method" value="X-ray"/>
    <property type="resolution" value="2.60 A"/>
    <property type="chains" value="A=27-387"/>
</dbReference>
<dbReference type="PDB" id="3MP6">
    <property type="method" value="X-ray"/>
    <property type="resolution" value="1.48 A"/>
    <property type="chains" value="A=27-387"/>
</dbReference>
<dbReference type="PDB" id="3MP8">
    <property type="method" value="X-ray"/>
    <property type="resolution" value="1.92 A"/>
    <property type="chains" value="A=27-387"/>
</dbReference>
<dbReference type="PDB" id="3MQ9">
    <property type="method" value="X-ray"/>
    <property type="resolution" value="2.80 A"/>
    <property type="chains" value="A/B/C/D/E/F/G/H=27-395"/>
</dbReference>
<dbReference type="PDB" id="3N93">
    <property type="method" value="X-ray"/>
    <property type="resolution" value="2.50 A"/>
    <property type="chains" value="A/B=25-392"/>
</dbReference>
<dbReference type="PDB" id="3N94">
    <property type="method" value="X-ray"/>
    <property type="resolution" value="1.80 A"/>
    <property type="chains" value="A=26-392"/>
</dbReference>
<dbReference type="PDB" id="3N95">
    <property type="method" value="X-ray"/>
    <property type="resolution" value="2.72 A"/>
    <property type="chains" value="A/B/C/D=25-392"/>
</dbReference>
<dbReference type="PDB" id="3N96">
    <property type="method" value="X-ray"/>
    <property type="resolution" value="2.75 A"/>
    <property type="chains" value="A/B/C/D=25-392"/>
</dbReference>
<dbReference type="PDB" id="3O3U">
    <property type="method" value="X-ray"/>
    <property type="resolution" value="1.50 A"/>
    <property type="chains" value="N=28-384"/>
</dbReference>
<dbReference type="PDB" id="3OAI">
    <property type="method" value="X-ray"/>
    <property type="resolution" value="2.10 A"/>
    <property type="chains" value="A/B=27-392"/>
</dbReference>
<dbReference type="PDB" id="3OB4">
    <property type="method" value="X-ray"/>
    <property type="resolution" value="2.71 A"/>
    <property type="chains" value="A=27-393"/>
</dbReference>
<dbReference type="PDB" id="3OSQ">
    <property type="method" value="X-ray"/>
    <property type="resolution" value="1.90 A"/>
    <property type="chains" value="A=27-396"/>
</dbReference>
<dbReference type="PDB" id="3OSR">
    <property type="method" value="X-ray"/>
    <property type="resolution" value="2.00 A"/>
    <property type="chains" value="A/B=27-396"/>
</dbReference>
<dbReference type="PDB" id="3PGF">
    <property type="method" value="X-ray"/>
    <property type="resolution" value="2.10 A"/>
    <property type="chains" value="A=27-393"/>
</dbReference>
<dbReference type="PDB" id="3PUV">
    <property type="method" value="X-ray"/>
    <property type="resolution" value="2.40 A"/>
    <property type="chains" value="E=27-396"/>
</dbReference>
<dbReference type="PDB" id="3PUW">
    <property type="method" value="X-ray"/>
    <property type="resolution" value="2.30 A"/>
    <property type="chains" value="E=27-396"/>
</dbReference>
<dbReference type="PDB" id="3PUX">
    <property type="method" value="X-ray"/>
    <property type="resolution" value="2.30 A"/>
    <property type="chains" value="E=27-396"/>
</dbReference>
<dbReference type="PDB" id="3PUY">
    <property type="method" value="X-ray"/>
    <property type="resolution" value="3.10 A"/>
    <property type="chains" value="E=27-396"/>
</dbReference>
<dbReference type="PDB" id="3PUZ">
    <property type="method" value="X-ray"/>
    <property type="resolution" value="2.90 A"/>
    <property type="chains" value="E=27-396"/>
</dbReference>
<dbReference type="PDB" id="3PV0">
    <property type="method" value="X-ray"/>
    <property type="resolution" value="3.10 A"/>
    <property type="chains" value="E=27-396"/>
</dbReference>
<dbReference type="PDB" id="3PY7">
    <property type="method" value="X-ray"/>
    <property type="resolution" value="2.29 A"/>
    <property type="chains" value="A=27-392"/>
</dbReference>
<dbReference type="PDB" id="3Q25">
    <property type="method" value="X-ray"/>
    <property type="resolution" value="1.90 A"/>
    <property type="chains" value="A=27-392"/>
</dbReference>
<dbReference type="PDB" id="3Q26">
    <property type="method" value="X-ray"/>
    <property type="resolution" value="1.54 A"/>
    <property type="chains" value="A=27-392"/>
</dbReference>
<dbReference type="PDB" id="3Q27">
    <property type="method" value="X-ray"/>
    <property type="resolution" value="1.30 A"/>
    <property type="chains" value="A=27-392"/>
</dbReference>
<dbReference type="PDB" id="3Q28">
    <property type="method" value="X-ray"/>
    <property type="resolution" value="1.60 A"/>
    <property type="chains" value="A=27-392"/>
</dbReference>
<dbReference type="PDB" id="3Q29">
    <property type="method" value="X-ray"/>
    <property type="resolution" value="2.30 A"/>
    <property type="chains" value="A/C=27-392"/>
</dbReference>
<dbReference type="PDB" id="3RLF">
    <property type="method" value="X-ray"/>
    <property type="resolution" value="2.20 A"/>
    <property type="chains" value="E=27-396"/>
</dbReference>
<dbReference type="PDB" id="3RUM">
    <property type="method" value="X-ray"/>
    <property type="resolution" value="1.85 A"/>
    <property type="chains" value="A=27-392"/>
</dbReference>
<dbReference type="PDB" id="3SER">
    <property type="method" value="X-ray"/>
    <property type="resolution" value="2.35 A"/>
    <property type="chains" value="A/C=27-384"/>
</dbReference>
<dbReference type="PDB" id="3SES">
    <property type="method" value="X-ray"/>
    <property type="resolution" value="1.90 A"/>
    <property type="chains" value="A/C=27-384"/>
</dbReference>
<dbReference type="PDB" id="3SET">
    <property type="method" value="X-ray"/>
    <property type="resolution" value="1.90 A"/>
    <property type="chains" value="A/C=27-384"/>
</dbReference>
<dbReference type="PDB" id="3SEU">
    <property type="method" value="X-ray"/>
    <property type="resolution" value="1.85 A"/>
    <property type="chains" value="A=27-384"/>
</dbReference>
<dbReference type="PDB" id="3SEV">
    <property type="method" value="X-ray"/>
    <property type="resolution" value="3.05 A"/>
    <property type="chains" value="A/C/E=27-384"/>
</dbReference>
<dbReference type="PDB" id="3SEW">
    <property type="method" value="X-ray"/>
    <property type="resolution" value="1.55 A"/>
    <property type="chains" value="A=27-384"/>
</dbReference>
<dbReference type="PDB" id="3SEX">
    <property type="method" value="X-ray"/>
    <property type="resolution" value="1.95 A"/>
    <property type="chains" value="A/C=27-384"/>
</dbReference>
<dbReference type="PDB" id="3SEY">
    <property type="method" value="X-ray"/>
    <property type="resolution" value="1.85 A"/>
    <property type="chains" value="A/C/E=27-384"/>
</dbReference>
<dbReference type="PDB" id="3VFJ">
    <property type="method" value="X-ray"/>
    <property type="resolution" value="2.05 A"/>
    <property type="chains" value="A=27-392"/>
</dbReference>
<dbReference type="PDB" id="3W15">
    <property type="method" value="X-ray"/>
    <property type="resolution" value="1.80 A"/>
    <property type="chains" value="C=27-396"/>
</dbReference>
<dbReference type="PDB" id="3WAI">
    <property type="method" value="X-ray"/>
    <property type="resolution" value="1.90 A"/>
    <property type="chains" value="A=27-392"/>
</dbReference>
<dbReference type="PDB" id="3WOA">
    <property type="method" value="X-ray"/>
    <property type="resolution" value="2.00 A"/>
    <property type="chains" value="A=27-393"/>
</dbReference>
<dbReference type="PDB" id="4B3N">
    <property type="method" value="X-ray"/>
    <property type="resolution" value="3.30 A"/>
    <property type="chains" value="A/B=27-395"/>
</dbReference>
<dbReference type="PDB" id="4BL8">
    <property type="method" value="X-ray"/>
    <property type="resolution" value="3.04 A"/>
    <property type="chains" value="A/B=27-393"/>
</dbReference>
<dbReference type="PDB" id="4BL9">
    <property type="method" value="X-ray"/>
    <property type="resolution" value="2.80 A"/>
    <property type="chains" value="A/B/C/D=27-393"/>
</dbReference>
<dbReference type="PDB" id="4BLA">
    <property type="method" value="X-ray"/>
    <property type="resolution" value="3.50 A"/>
    <property type="chains" value="A/B/C/D=27-393"/>
</dbReference>
<dbReference type="PDB" id="4BLB">
    <property type="method" value="X-ray"/>
    <property type="resolution" value="2.80 A"/>
    <property type="chains" value="A/B/C/D=27-393"/>
</dbReference>
<dbReference type="PDB" id="4BLD">
    <property type="method" value="X-ray"/>
    <property type="resolution" value="2.80 A"/>
    <property type="chains" value="A/B/C/D=27-393"/>
</dbReference>
<dbReference type="PDB" id="4DXB">
    <property type="method" value="X-ray"/>
    <property type="resolution" value="2.29 A"/>
    <property type="chains" value="A/B=27-396"/>
</dbReference>
<dbReference type="PDB" id="4DXC">
    <property type="method" value="X-ray"/>
    <property type="resolution" value="2.30 A"/>
    <property type="chains" value="A=27-396"/>
</dbReference>
<dbReference type="PDB" id="4EDQ">
    <property type="method" value="X-ray"/>
    <property type="resolution" value="1.64 A"/>
    <property type="chains" value="A/B=27-384"/>
</dbReference>
<dbReference type="PDB" id="4EGC">
    <property type="method" value="X-ray"/>
    <property type="resolution" value="1.99 A"/>
    <property type="chains" value="A=27-392"/>
</dbReference>
<dbReference type="PDB" id="4EXK">
    <property type="method" value="X-ray"/>
    <property type="resolution" value="1.28 A"/>
    <property type="chains" value="A=26-392"/>
</dbReference>
<dbReference type="PDB" id="4FE8">
    <property type="method" value="X-ray"/>
    <property type="resolution" value="3.00 A"/>
    <property type="chains" value="A/B/C=27-384"/>
</dbReference>
<dbReference type="PDB" id="4FEB">
    <property type="method" value="X-ray"/>
    <property type="resolution" value="2.80 A"/>
    <property type="chains" value="A/B/C=27-384"/>
</dbReference>
<dbReference type="PDB" id="4FEC">
    <property type="method" value="X-ray"/>
    <property type="resolution" value="3.00 A"/>
    <property type="chains" value="A/B/C=27-384"/>
</dbReference>
<dbReference type="PDB" id="4FED">
    <property type="method" value="X-ray"/>
    <property type="resolution" value="2.81 A"/>
    <property type="chains" value="A/B/C=27-384"/>
</dbReference>
<dbReference type="PDB" id="4GIZ">
    <property type="method" value="X-ray"/>
    <property type="resolution" value="2.55 A"/>
    <property type="chains" value="A/B=27-392"/>
</dbReference>
<dbReference type="PDB" id="4GLI">
    <property type="method" value="X-ray"/>
    <property type="resolution" value="1.90 A"/>
    <property type="chains" value="A=27-395"/>
</dbReference>
<dbReference type="PDB" id="4IFP">
    <property type="method" value="X-ray"/>
    <property type="resolution" value="1.99 A"/>
    <property type="chains" value="A/B/C=27-384"/>
</dbReference>
<dbReference type="PDB" id="4IKM">
    <property type="method" value="X-ray"/>
    <property type="resolution" value="2.46 A"/>
    <property type="chains" value="A=27-392"/>
</dbReference>
<dbReference type="PDB" id="4IRL">
    <property type="method" value="X-ray"/>
    <property type="resolution" value="1.47 A"/>
    <property type="chains" value="A/B/C=27-384"/>
</dbReference>
<dbReference type="PDB" id="4JBZ">
    <property type="method" value="X-ray"/>
    <property type="resolution" value="2.40 A"/>
    <property type="chains" value="A/B/C=27-392"/>
</dbReference>
<dbReference type="PDB" id="4JKM">
    <property type="method" value="X-ray"/>
    <property type="resolution" value="2.26 A"/>
    <property type="chains" value="C/D=27-392"/>
</dbReference>
<dbReference type="PDB" id="4KEG">
    <property type="method" value="X-ray"/>
    <property type="resolution" value="2.50 A"/>
    <property type="chains" value="A=27-387"/>
</dbReference>
<dbReference type="PDB" id="4KHZ">
    <property type="method" value="X-ray"/>
    <property type="resolution" value="2.90 A"/>
    <property type="chains" value="E=27-396"/>
</dbReference>
<dbReference type="PDB" id="4KI0">
    <property type="method" value="X-ray"/>
    <property type="resolution" value="2.38 A"/>
    <property type="chains" value="E=27-396"/>
</dbReference>
<dbReference type="PDB" id="4KV3">
    <property type="method" value="X-ray"/>
    <property type="resolution" value="2.20 A"/>
    <property type="chains" value="A/B=27-392"/>
</dbReference>
<dbReference type="PDB" id="4KYC">
    <property type="method" value="X-ray"/>
    <property type="resolution" value="1.95 A"/>
    <property type="chains" value="A=27-392"/>
</dbReference>
<dbReference type="PDB" id="4KYD">
    <property type="method" value="X-ray"/>
    <property type="resolution" value="2.21 A"/>
    <property type="chains" value="A/B=27-392"/>
</dbReference>
<dbReference type="PDB" id="4KYE">
    <property type="method" value="X-ray"/>
    <property type="resolution" value="2.60 A"/>
    <property type="chains" value="A=27-392"/>
</dbReference>
<dbReference type="PDB" id="4LOG">
    <property type="method" value="X-ray"/>
    <property type="resolution" value="2.70 A"/>
    <property type="chains" value="A/B=26-392"/>
</dbReference>
<dbReference type="PDB" id="4MBP">
    <property type="method" value="X-ray"/>
    <property type="resolution" value="1.70 A"/>
    <property type="chains" value="A=27-396"/>
</dbReference>
<dbReference type="PDB" id="4MY2">
    <property type="method" value="X-ray"/>
    <property type="resolution" value="2.40 A"/>
    <property type="chains" value="A=25-392"/>
</dbReference>
<dbReference type="PDB" id="4N4X">
    <property type="method" value="X-ray"/>
    <property type="resolution" value="2.50 A"/>
    <property type="chains" value="A=27-387"/>
</dbReference>
<dbReference type="PDB" id="4NDZ">
    <property type="method" value="X-ray"/>
    <property type="resolution" value="3.45 A"/>
    <property type="chains" value="A/B/C/D/E/F=27-393"/>
</dbReference>
<dbReference type="PDB" id="4NUF">
    <property type="method" value="X-ray"/>
    <property type="resolution" value="2.80 A"/>
    <property type="chains" value="A=25-392"/>
</dbReference>
<dbReference type="PDB" id="4O2X">
    <property type="method" value="X-ray"/>
    <property type="resolution" value="2.70 A"/>
    <property type="chains" value="A/B=27-396"/>
</dbReference>
<dbReference type="PDB" id="4OGM">
    <property type="method" value="X-ray"/>
    <property type="resolution" value="2.23 A"/>
    <property type="chains" value="A=27-387"/>
</dbReference>
<dbReference type="PDB" id="4PE2">
    <property type="method" value="X-ray"/>
    <property type="resolution" value="1.72 A"/>
    <property type="chains" value="A=27-392"/>
</dbReference>
<dbReference type="PDB" id="4PQK">
    <property type="method" value="X-ray"/>
    <property type="resolution" value="3.40 A"/>
    <property type="chains" value="A/B/C/D=27-392"/>
</dbReference>
<dbReference type="PDB" id="4QSZ">
    <property type="method" value="X-ray"/>
    <property type="resolution" value="2.86 A"/>
    <property type="chains" value="A/B=27-387"/>
</dbReference>
<dbReference type="PDB" id="4QVH">
    <property type="method" value="X-ray"/>
    <property type="resolution" value="1.75 A"/>
    <property type="chains" value="A/B=27-392"/>
</dbReference>
<dbReference type="PDB" id="4R0Y">
    <property type="method" value="X-ray"/>
    <property type="resolution" value="2.00 A"/>
    <property type="chains" value="A/B=27-387"/>
</dbReference>
<dbReference type="PDB" id="4RG5">
    <property type="method" value="X-ray"/>
    <property type="resolution" value="1.70 A"/>
    <property type="chains" value="A/B=27-395"/>
</dbReference>
<dbReference type="PDB" id="4RWF">
    <property type="method" value="X-ray"/>
    <property type="resolution" value="1.76 A"/>
    <property type="chains" value="A=26-392"/>
</dbReference>
<dbReference type="PDB" id="4RWG">
    <property type="method" value="X-ray"/>
    <property type="resolution" value="2.44 A"/>
    <property type="chains" value="A/B/C=26-392"/>
</dbReference>
<dbReference type="PDB" id="4TSM">
    <property type="method" value="X-ray"/>
    <property type="resolution" value="1.90 A"/>
    <property type="chains" value="A/B/C=27-392"/>
</dbReference>
<dbReference type="PDB" id="4WJV">
    <property type="method" value="X-ray"/>
    <property type="resolution" value="3.20 A"/>
    <property type="chains" value="E/F/G/H=27-393"/>
</dbReference>
<dbReference type="PDB" id="4WMS">
    <property type="method" value="X-ray"/>
    <property type="resolution" value="1.90 A"/>
    <property type="chains" value="A=27-392"/>
</dbReference>
<dbReference type="PDB" id="4WMT">
    <property type="method" value="X-ray"/>
    <property type="resolution" value="2.35 A"/>
    <property type="chains" value="A=27-392"/>
</dbReference>
<dbReference type="PDB" id="4WMU">
    <property type="method" value="X-ray"/>
    <property type="resolution" value="1.55 A"/>
    <property type="chains" value="A=27-392"/>
</dbReference>
<dbReference type="PDB" id="4WMV">
    <property type="method" value="X-ray"/>
    <property type="resolution" value="2.40 A"/>
    <property type="chains" value="A=27-392"/>
</dbReference>
<dbReference type="PDB" id="4WMW">
    <property type="method" value="X-ray"/>
    <property type="resolution" value="1.90 A"/>
    <property type="chains" value="A=27-392"/>
</dbReference>
<dbReference type="PDB" id="4WMX">
    <property type="method" value="X-ray"/>
    <property type="resolution" value="2.00 A"/>
    <property type="chains" value="A=27-392"/>
</dbReference>
<dbReference type="PDB" id="4WRN">
    <property type="method" value="X-ray"/>
    <property type="resolution" value="3.20 A"/>
    <property type="chains" value="A/B=27-393"/>
</dbReference>
<dbReference type="PDB" id="4WTH">
    <property type="method" value="X-ray"/>
    <property type="resolution" value="2.25 A"/>
    <property type="chains" value="A/B=27-392"/>
</dbReference>
<dbReference type="PDB" id="4WVG">
    <property type="method" value="X-ray"/>
    <property type="resolution" value="2.05 A"/>
    <property type="chains" value="A=33-393"/>
</dbReference>
<dbReference type="PDB" id="4WVH">
    <property type="method" value="X-ray"/>
    <property type="resolution" value="2.10 A"/>
    <property type="chains" value="A=33-392"/>
</dbReference>
<dbReference type="PDB" id="4WVI">
    <property type="method" value="X-ray"/>
    <property type="resolution" value="1.90 A"/>
    <property type="chains" value="A=33-393"/>
</dbReference>
<dbReference type="PDB" id="4WVJ">
    <property type="method" value="X-ray"/>
    <property type="resolution" value="1.95 A"/>
    <property type="chains" value="A=33-393"/>
</dbReference>
<dbReference type="PDB" id="4XA2">
    <property type="method" value="X-ray"/>
    <property type="resolution" value="1.98 A"/>
    <property type="chains" value="A/B=27-392"/>
</dbReference>
<dbReference type="PDB" id="4XAJ">
    <property type="method" value="X-ray"/>
    <property type="resolution" value="3.55 A"/>
    <property type="chains" value="A/B/C/D=25-392"/>
</dbReference>
<dbReference type="PDB" id="4XHS">
    <property type="method" value="X-ray"/>
    <property type="resolution" value="1.70 A"/>
    <property type="chains" value="A/B=27-392"/>
</dbReference>
<dbReference type="PDB" id="4XR8">
    <property type="method" value="X-ray"/>
    <property type="resolution" value="2.25 A"/>
    <property type="chains" value="A/B=27-392"/>
</dbReference>
<dbReference type="PDB" id="4XZS">
    <property type="method" value="X-ray"/>
    <property type="resolution" value="2.12 A"/>
    <property type="chains" value="A/B=27-392"/>
</dbReference>
<dbReference type="PDB" id="4XZV">
    <property type="method" value="X-ray"/>
    <property type="resolution" value="3.58 A"/>
    <property type="chains" value="A/C/E/G=27-392"/>
</dbReference>
<dbReference type="PDB" id="5AQ9">
    <property type="method" value="X-ray"/>
    <property type="resolution" value="1.86 A"/>
    <property type="chains" value="B/D=33-392"/>
</dbReference>
<dbReference type="PDB" id="5AZ6">
    <property type="method" value="X-ray"/>
    <property type="resolution" value="2.56 A"/>
    <property type="chains" value="A/B=27-394"/>
</dbReference>
<dbReference type="PDB" id="5AZ7">
    <property type="method" value="X-ray"/>
    <property type="resolution" value="1.96 A"/>
    <property type="chains" value="A=27-394"/>
</dbReference>
<dbReference type="PDB" id="5AZ8">
    <property type="method" value="X-ray"/>
    <property type="resolution" value="1.70 A"/>
    <property type="chains" value="A=27-394"/>
</dbReference>
<dbReference type="PDB" id="5AZ9">
    <property type="method" value="X-ray"/>
    <property type="resolution" value="1.82 A"/>
    <property type="chains" value="A=27-394"/>
</dbReference>
<dbReference type="PDB" id="5AZA">
    <property type="method" value="X-ray"/>
    <property type="resolution" value="2.08 A"/>
    <property type="chains" value="A=27-394"/>
</dbReference>
<dbReference type="PDB" id="5B3W">
    <property type="method" value="X-ray"/>
    <property type="resolution" value="2.40 A"/>
    <property type="chains" value="A/B=27-393"/>
</dbReference>
<dbReference type="PDB" id="5B3X">
    <property type="method" value="X-ray"/>
    <property type="resolution" value="2.40 A"/>
    <property type="chains" value="A=27-393"/>
</dbReference>
<dbReference type="PDB" id="5B3Y">
    <property type="method" value="X-ray"/>
    <property type="resolution" value="1.90 A"/>
    <property type="chains" value="A=27-392"/>
</dbReference>
<dbReference type="PDB" id="5B3Z">
    <property type="method" value="X-ray"/>
    <property type="resolution" value="2.30 A"/>
    <property type="chains" value="A/B/C/D=27-393"/>
</dbReference>
<dbReference type="PDB" id="5BJZ">
    <property type="method" value="X-ray"/>
    <property type="resolution" value="1.95 A"/>
    <property type="chains" value="A/B=26-392"/>
</dbReference>
<dbReference type="PDB" id="5BK1">
    <property type="method" value="X-ray"/>
    <property type="resolution" value="2.15 A"/>
    <property type="chains" value="A/B=26-392"/>
</dbReference>
<dbReference type="PDB" id="5BK2">
    <property type="method" value="X-ray"/>
    <property type="resolution" value="2.60 A"/>
    <property type="chains" value="A/B=27-392"/>
</dbReference>
<dbReference type="PDB" id="5BMY">
    <property type="method" value="X-ray"/>
    <property type="resolution" value="2.00 A"/>
    <property type="chains" value="A=27-393"/>
</dbReference>
<dbReference type="PDB" id="5C7R">
    <property type="method" value="X-ray"/>
    <property type="resolution" value="1.94 A"/>
    <property type="chains" value="A/B=27-384"/>
</dbReference>
<dbReference type="PDB" id="5CBN">
    <property type="method" value="X-ray"/>
    <property type="resolution" value="2.30 A"/>
    <property type="chains" value="B=27-392"/>
</dbReference>
<dbReference type="PDB" id="5CFV">
    <property type="method" value="X-ray"/>
    <property type="resolution" value="1.80 A"/>
    <property type="chains" value="A=27-392"/>
</dbReference>
<dbReference type="PDB" id="5DFM">
    <property type="method" value="X-ray"/>
    <property type="resolution" value="2.30 A"/>
    <property type="chains" value="A/B=27-384"/>
</dbReference>
<dbReference type="PDB" id="5DIS">
    <property type="method" value="X-ray"/>
    <property type="resolution" value="2.85 A"/>
    <property type="chains" value="D=32-387"/>
</dbReference>
<dbReference type="PDB" id="5E24">
    <property type="method" value="X-ray"/>
    <property type="resolution" value="2.14 A"/>
    <property type="chains" value="A/C=27-396"/>
</dbReference>
<dbReference type="PDB" id="5E7U">
    <property type="method" value="X-ray"/>
    <property type="resolution" value="2.80 A"/>
    <property type="chains" value="A=27-389"/>
</dbReference>
<dbReference type="PDB" id="5EDU">
    <property type="method" value="X-ray"/>
    <property type="resolution" value="2.79 A"/>
    <property type="chains" value="A/B=27-392"/>
</dbReference>
<dbReference type="PDB" id="5FIO">
    <property type="method" value="X-ray"/>
    <property type="resolution" value="2.10 A"/>
    <property type="chains" value="B=29-392"/>
</dbReference>
<dbReference type="PDB" id="5FSG">
    <property type="method" value="X-ray"/>
    <property type="resolution" value="3.21 A"/>
    <property type="chains" value="A=27-384"/>
</dbReference>
<dbReference type="PDB" id="5GPP">
    <property type="method" value="X-ray"/>
    <property type="resolution" value="2.00 A"/>
    <property type="chains" value="A/B=27-384"/>
</dbReference>
<dbReference type="PDB" id="5GPQ">
    <property type="method" value="X-ray"/>
    <property type="resolution" value="2.10 A"/>
    <property type="chains" value="A=27-384"/>
</dbReference>
<dbReference type="PDB" id="5GRU">
    <property type="method" value="X-ray"/>
    <property type="resolution" value="1.96 A"/>
    <property type="chains" value="A=27-392"/>
</dbReference>
<dbReference type="PDB" id="5GS2">
    <property type="method" value="X-ray"/>
    <property type="resolution" value="3.59 A"/>
    <property type="chains" value="A=27-393"/>
</dbReference>
<dbReference type="PDB" id="5GXT">
    <property type="method" value="X-ray"/>
    <property type="resolution" value="2.25 A"/>
    <property type="chains" value="A=27-392"/>
</dbReference>
<dbReference type="PDB" id="5GXV">
    <property type="method" value="X-ray"/>
    <property type="resolution" value="2.10 A"/>
    <property type="chains" value="A=27-392"/>
</dbReference>
<dbReference type="PDB" id="5H7N">
    <property type="method" value="X-ray"/>
    <property type="resolution" value="1.85 A"/>
    <property type="chains" value="A/B=27-392"/>
</dbReference>
<dbReference type="PDB" id="5H7Q">
    <property type="method" value="X-ray"/>
    <property type="resolution" value="1.45 A"/>
    <property type="chains" value="A=27-392"/>
</dbReference>
<dbReference type="PDB" id="5HZ7">
    <property type="method" value="X-ray"/>
    <property type="resolution" value="1.43 A"/>
    <property type="chains" value="A=27-392"/>
</dbReference>
<dbReference type="PDB" id="5HZV">
    <property type="method" value="X-ray"/>
    <property type="resolution" value="2.70 A"/>
    <property type="chains" value="A=27-393"/>
</dbReference>
<dbReference type="PDB" id="5HZW">
    <property type="method" value="X-ray"/>
    <property type="resolution" value="4.45 A"/>
    <property type="chains" value="A=27-393"/>
</dbReference>
<dbReference type="PDB" id="5I04">
    <property type="method" value="X-ray"/>
    <property type="resolution" value="2.42 A"/>
    <property type="chains" value="A=27-393"/>
</dbReference>
<dbReference type="PDB" id="5I69">
    <property type="method" value="X-ray"/>
    <property type="resolution" value="2.70 A"/>
    <property type="chains" value="A=27-392"/>
</dbReference>
<dbReference type="PDB" id="5IHJ">
    <property type="method" value="X-ray"/>
    <property type="resolution" value="2.20 A"/>
    <property type="chains" value="A=27-392"/>
</dbReference>
<dbReference type="PDB" id="5II5">
    <property type="method" value="X-ray"/>
    <property type="resolution" value="1.80 A"/>
    <property type="chains" value="A=27-393"/>
</dbReference>
<dbReference type="PDB" id="5IIC">
    <property type="method" value="X-ray"/>
    <property type="resolution" value="2.90 A"/>
    <property type="chains" value="A/B=27-393"/>
</dbReference>
<dbReference type="PDB" id="5IQZ">
    <property type="method" value="X-ray"/>
    <property type="resolution" value="2.33 A"/>
    <property type="chains" value="A=27-392"/>
</dbReference>
<dbReference type="PDB" id="5JJ4">
    <property type="method" value="X-ray"/>
    <property type="resolution" value="2.81 A"/>
    <property type="chains" value="A/B/C=27-393"/>
</dbReference>
<dbReference type="PDB" id="5JST">
    <property type="method" value="X-ray"/>
    <property type="resolution" value="2.20 A"/>
    <property type="chains" value="A/B=27-392"/>
</dbReference>
<dbReference type="PDB" id="5JTQ">
    <property type="method" value="NMR"/>
    <property type="chains" value="E/F=108-149"/>
</dbReference>
<dbReference type="PDB" id="5JTR">
    <property type="method" value="NMR"/>
    <property type="chains" value="E/F/G/H=168-207"/>
</dbReference>
<dbReference type="PDB" id="5LDF">
    <property type="method" value="EM"/>
    <property type="resolution" value="6.20 A"/>
    <property type="chains" value="M/N/O/P/Q/R/S/T/U/V/W/X=27-396"/>
</dbReference>
<dbReference type="PDB" id="5LEL">
    <property type="method" value="X-ray"/>
    <property type="resolution" value="3.10 A"/>
    <property type="chains" value="B/E/H=29-392"/>
</dbReference>
<dbReference type="PDB" id="5LEM">
    <property type="method" value="X-ray"/>
    <property type="resolution" value="2.98 A"/>
    <property type="chains" value="B=29-392"/>
</dbReference>
<dbReference type="PDB" id="5M13">
    <property type="method" value="X-ray"/>
    <property type="resolution" value="1.37 A"/>
    <property type="chains" value="A=27-392"/>
</dbReference>
<dbReference type="PDB" id="5M14">
    <property type="method" value="X-ray"/>
    <property type="resolution" value="1.60 A"/>
    <property type="chains" value="A/B=27-392"/>
</dbReference>
<dbReference type="PDB" id="5M15">
    <property type="method" value="X-ray"/>
    <property type="resolution" value="1.90 A"/>
    <property type="chains" value="A/B=27-392"/>
</dbReference>
<dbReference type="PDB" id="5MM3">
    <property type="method" value="X-ray"/>
    <property type="resolution" value="2.10 A"/>
    <property type="chains" value="A/B=26-392"/>
</dbReference>
<dbReference type="PDB" id="5OSQ">
    <property type="method" value="X-ray"/>
    <property type="resolution" value="2.05 A"/>
    <property type="chains" value="A/B=27-393"/>
</dbReference>
<dbReference type="PDB" id="5T03">
    <property type="method" value="X-ray"/>
    <property type="resolution" value="2.10 A"/>
    <property type="chains" value="A/B=27-392"/>
</dbReference>
<dbReference type="PDB" id="5T05">
    <property type="method" value="X-ray"/>
    <property type="resolution" value="1.95 A"/>
    <property type="chains" value="A/B=27-392"/>
</dbReference>
<dbReference type="PDB" id="5T0A">
    <property type="method" value="X-ray"/>
    <property type="resolution" value="1.95 A"/>
    <property type="chains" value="A/B=27-392"/>
</dbReference>
<dbReference type="PDB" id="5TTD">
    <property type="method" value="X-ray"/>
    <property type="resolution" value="2.00 A"/>
    <property type="chains" value="A/B=33-392"/>
</dbReference>
<dbReference type="PDB" id="5V6Y">
    <property type="method" value="X-ray"/>
    <property type="resolution" value="2.80 A"/>
    <property type="chains" value="A/B/C/D=25-392"/>
</dbReference>
<dbReference type="PDB" id="5VAW">
    <property type="method" value="X-ray"/>
    <property type="resolution" value="1.69 A"/>
    <property type="chains" value="A=27-392"/>
</dbReference>
<dbReference type="PDB" id="5W0R">
    <property type="method" value="X-ray"/>
    <property type="resolution" value="2.40 A"/>
    <property type="chains" value="A/B=27-392"/>
</dbReference>
<dbReference type="PDB" id="5W0U">
    <property type="method" value="X-ray"/>
    <property type="resolution" value="2.90 A"/>
    <property type="chains" value="A/B=27-392"/>
</dbReference>
<dbReference type="PDB" id="5W0Z">
    <property type="method" value="X-ray"/>
    <property type="resolution" value="3.61 A"/>
    <property type="chains" value="A/B=27-392"/>
</dbReference>
<dbReference type="PDB" id="5W1C">
    <property type="method" value="X-ray"/>
    <property type="resolution" value="3.18 A"/>
    <property type="chains" value="A/B=27-392"/>
</dbReference>
<dbReference type="PDB" id="5WPZ">
    <property type="method" value="X-ray"/>
    <property type="resolution" value="2.00 A"/>
    <property type="chains" value="A/B/C/D/E/F=27-392"/>
</dbReference>
<dbReference type="PDB" id="5WQ6">
    <property type="method" value="X-ray"/>
    <property type="resolution" value="1.65 A"/>
    <property type="chains" value="A/B/C/D=27-392"/>
</dbReference>
<dbReference type="PDB" id="5Y2G">
    <property type="method" value="X-ray"/>
    <property type="resolution" value="3.00 A"/>
    <property type="chains" value="A=27-392"/>
</dbReference>
<dbReference type="PDB" id="5YGP">
    <property type="method" value="X-ray"/>
    <property type="resolution" value="2.09 A"/>
    <property type="chains" value="A/B/C/D=27-392"/>
</dbReference>
<dbReference type="PDB" id="5YGS">
    <property type="method" value="X-ray"/>
    <property type="resolution" value="2.69 A"/>
    <property type="chains" value="A/B/C/D=27-392"/>
</dbReference>
<dbReference type="PDB" id="5Z0R">
    <property type="method" value="X-ray"/>
    <property type="resolution" value="2.05 A"/>
    <property type="chains" value="A/B=27-395"/>
</dbReference>
<dbReference type="PDB" id="5Z0V">
    <property type="method" value="X-ray"/>
    <property type="resolution" value="2.91 A"/>
    <property type="chains" value="A/B/C/D=27-395"/>
</dbReference>
<dbReference type="PDB" id="5ZCA">
    <property type="method" value="X-ray"/>
    <property type="resolution" value="1.80 A"/>
    <property type="chains" value="A=28-392"/>
</dbReference>
<dbReference type="PDB" id="5ZNY">
    <property type="method" value="X-ray"/>
    <property type="resolution" value="2.74 A"/>
    <property type="chains" value="A/B/C/D=27-392"/>
</dbReference>
<dbReference type="PDB" id="5ZNZ">
    <property type="method" value="X-ray"/>
    <property type="resolution" value="2.55 A"/>
    <property type="chains" value="A/B/C/D=27-392"/>
</dbReference>
<dbReference type="PDB" id="5ZR0">
    <property type="method" value="NMR"/>
    <property type="chains" value="A=238-266"/>
</dbReference>
<dbReference type="PDB" id="6ANV">
    <property type="method" value="X-ray"/>
    <property type="resolution" value="2.27 A"/>
    <property type="chains" value="A/B=27-396"/>
</dbReference>
<dbReference type="PDB" id="6APX">
    <property type="method" value="X-ray"/>
    <property type="resolution" value="2.49 A"/>
    <property type="chains" value="A=27-392"/>
</dbReference>
<dbReference type="PDB" id="6BUZ">
    <property type="method" value="EM"/>
    <property type="resolution" value="3.92 A"/>
    <property type="chains" value="N=26-394"/>
</dbReference>
<dbReference type="PDB" id="6CXS">
    <property type="method" value="X-ray"/>
    <property type="resolution" value="2.80 A"/>
    <property type="chains" value="C/D=27-392"/>
</dbReference>
<dbReference type="PDB" id="6D1U">
    <property type="method" value="X-ray"/>
    <property type="resolution" value="2.05 A"/>
    <property type="chains" value="A/B/C=25-392"/>
</dbReference>
<dbReference type="PDB" id="6D65">
    <property type="method" value="X-ray"/>
    <property type="resolution" value="2.35 A"/>
    <property type="chains" value="A/C=27-391"/>
</dbReference>
<dbReference type="PDB" id="6D66">
    <property type="method" value="X-ray"/>
    <property type="resolution" value="2.23 A"/>
    <property type="chains" value="A=27-391"/>
</dbReference>
<dbReference type="PDB" id="6D67">
    <property type="method" value="X-ray"/>
    <property type="resolution" value="2.55 A"/>
    <property type="chains" value="A=27-391"/>
</dbReference>
<dbReference type="PDB" id="6DD5">
    <property type="method" value="X-ray"/>
    <property type="resolution" value="2.85 A"/>
    <property type="chains" value="A/B=27-384"/>
</dbReference>
<dbReference type="PDB" id="6DKS">
    <property type="method" value="X-ray"/>
    <property type="resolution" value="2.78 A"/>
    <property type="chains" value="D/H=28-392"/>
</dbReference>
<dbReference type="PDB" id="6DM8">
    <property type="method" value="X-ray"/>
    <property type="resolution" value="2.70 A"/>
    <property type="chains" value="A/B/C/D/E/F/G/H=27-392"/>
</dbReference>
<dbReference type="PDB" id="6EG2">
    <property type="method" value="X-ray"/>
    <property type="resolution" value="2.98 A"/>
    <property type="chains" value="A=27-392"/>
</dbReference>
<dbReference type="PDB" id="6EG3">
    <property type="method" value="X-ray"/>
    <property type="resolution" value="2.84 A"/>
    <property type="chains" value="A=27-392"/>
</dbReference>
<dbReference type="PDB" id="6EQZ">
    <property type="method" value="X-ray"/>
    <property type="resolution" value="2.29 A"/>
    <property type="chains" value="A/B/D/G=27-195, A/B/D/G=207-392"/>
</dbReference>
<dbReference type="PDB" id="6HD8">
    <property type="method" value="X-ray"/>
    <property type="resolution" value="2.40 A"/>
    <property type="chains" value="A=32-392"/>
</dbReference>
<dbReference type="PDB" id="6HD9">
    <property type="method" value="X-ray"/>
    <property type="resolution" value="3.50 A"/>
    <property type="chains" value="A=32-392"/>
</dbReference>
<dbReference type="PDB" id="6HDA">
    <property type="method" value="X-ray"/>
    <property type="resolution" value="3.80 A"/>
    <property type="chains" value="A=32-392"/>
</dbReference>
<dbReference type="PDB" id="6HDB">
    <property type="method" value="X-ray"/>
    <property type="resolution" value="2.90 A"/>
    <property type="chains" value="A=32-392"/>
</dbReference>
<dbReference type="PDB" id="6HDC">
    <property type="method" value="X-ray"/>
    <property type="resolution" value="3.40 A"/>
    <property type="chains" value="A=32-392"/>
</dbReference>
<dbReference type="PDB" id="6I4Y">
    <property type="method" value="X-ray"/>
    <property type="resolution" value="2.91 A"/>
    <property type="chains" value="A=27-393"/>
</dbReference>
<dbReference type="PDB" id="6K7D">
    <property type="method" value="X-ray"/>
    <property type="resolution" value="2.00 A"/>
    <property type="chains" value="A=27-394"/>
</dbReference>
<dbReference type="PDB" id="6K7E">
    <property type="method" value="X-ray"/>
    <property type="resolution" value="1.53 A"/>
    <property type="chains" value="A=27-394"/>
</dbReference>
<dbReference type="PDB" id="6K7F">
    <property type="method" value="X-ray"/>
    <property type="resolution" value="1.80 A"/>
    <property type="chains" value="A=27-394"/>
</dbReference>
<dbReference type="PDB" id="6KEA">
    <property type="method" value="X-ray"/>
    <property type="resolution" value="2.35 A"/>
    <property type="chains" value="A/B/C/D=27-392"/>
</dbReference>
<dbReference type="PDB" id="6KI0">
    <property type="method" value="X-ray"/>
    <property type="resolution" value="2.00 A"/>
    <property type="chains" value="A/B=27-384"/>
</dbReference>
<dbReference type="PDB" id="6KXG">
    <property type="method" value="X-ray"/>
    <property type="resolution" value="2.81 A"/>
    <property type="chains" value="A/B/C/D=27-392"/>
</dbReference>
<dbReference type="PDB" id="6LES">
    <property type="method" value="X-ray"/>
    <property type="resolution" value="2.00 A"/>
    <property type="chains" value="A/B/X/Y=27-392"/>
</dbReference>
<dbReference type="PDB" id="6LF3">
    <property type="method" value="X-ray"/>
    <property type="resolution" value="3.20 A"/>
    <property type="chains" value="A/B/C/D/E/F=27-392"/>
</dbReference>
<dbReference type="PDB" id="6M4V">
    <property type="method" value="X-ray"/>
    <property type="resolution" value="2.92 A"/>
    <property type="chains" value="A/C=27-392"/>
</dbReference>
<dbReference type="PDB" id="6M4W">
    <property type="method" value="X-ray"/>
    <property type="resolution" value="3.11 A"/>
    <property type="chains" value="A/B/C=27-392"/>
</dbReference>
<dbReference type="PDB" id="6N84">
    <property type="method" value="X-ray"/>
    <property type="resolution" value="1.75 A"/>
    <property type="chains" value="A=27-396"/>
</dbReference>
<dbReference type="PDB" id="6N85">
    <property type="method" value="X-ray"/>
    <property type="resolution" value="2.50 A"/>
    <property type="chains" value="M=27-392"/>
</dbReference>
<dbReference type="PDB" id="6NDJ">
    <property type="method" value="X-ray"/>
    <property type="resolution" value="2.27 A"/>
    <property type="chains" value="A/B=29-387"/>
</dbReference>
<dbReference type="PDB" id="6OB5">
    <property type="method" value="X-ray"/>
    <property type="resolution" value="2.21 A"/>
    <property type="chains" value="A/B=25-396"/>
</dbReference>
<dbReference type="PDB" id="6P6W">
    <property type="method" value="EM"/>
    <property type="resolution" value="4.00 A"/>
    <property type="chains" value="A/B/C/D=1-392"/>
</dbReference>
<dbReference type="PDB" id="6QGD">
    <property type="method" value="X-ray"/>
    <property type="resolution" value="1.80 A"/>
    <property type="chains" value="A=27-392"/>
</dbReference>
<dbReference type="PDB" id="6QUG">
    <property type="method" value="X-ray"/>
    <property type="resolution" value="2.70 A"/>
    <property type="chains" value="A/B/C/D/E/F/G/H/I/J/K/L=27-392"/>
</dbReference>
<dbReference type="PDB" id="6QXJ">
    <property type="method" value="X-ray"/>
    <property type="resolution" value="1.70 A"/>
    <property type="chains" value="A=27-392"/>
</dbReference>
<dbReference type="PDB" id="6QYK">
    <property type="method" value="X-ray"/>
    <property type="resolution" value="2.30 A"/>
    <property type="chains" value="A=27-392"/>
</dbReference>
<dbReference type="PDB" id="6QYL">
    <property type="method" value="X-ray"/>
    <property type="resolution" value="2.20 A"/>
    <property type="chains" value="A=27-392"/>
</dbReference>
<dbReference type="PDB" id="6QYN">
    <property type="method" value="X-ray"/>
    <property type="resolution" value="2.50 A"/>
    <property type="chains" value="A=27-392"/>
</dbReference>
<dbReference type="PDB" id="6QYO">
    <property type="method" value="X-ray"/>
    <property type="resolution" value="2.10 A"/>
    <property type="chains" value="A=27-392"/>
</dbReference>
<dbReference type="PDB" id="6QZ7">
    <property type="method" value="X-ray"/>
    <property type="resolution" value="2.20 A"/>
    <property type="chains" value="A=27-392"/>
</dbReference>
<dbReference type="PDB" id="6SIV">
    <property type="method" value="X-ray"/>
    <property type="resolution" value="1.75 A"/>
    <property type="chains" value="A=26-387"/>
</dbReference>
<dbReference type="PDB" id="6SJA">
    <property type="method" value="X-ray"/>
    <property type="resolution" value="1.50 A"/>
    <property type="chains" value="A=27-387"/>
</dbReference>
<dbReference type="PDB" id="6SLM">
    <property type="method" value="X-ray"/>
    <property type="resolution" value="2.80 A"/>
    <property type="chains" value="A=26-396"/>
</dbReference>
<dbReference type="PDB" id="6SMV">
    <property type="method" value="X-ray"/>
    <property type="resolution" value="2.14 A"/>
    <property type="chains" value="A=26-392"/>
</dbReference>
<dbReference type="PDB" id="6SWR">
    <property type="method" value="X-ray"/>
    <property type="resolution" value="3.20 A"/>
    <property type="chains" value="A/D=32-395"/>
</dbReference>
<dbReference type="PDB" id="6TZC">
    <property type="method" value="X-ray"/>
    <property type="resolution" value="2.41 A"/>
    <property type="chains" value="A=27-392"/>
</dbReference>
<dbReference type="PDB" id="6USM">
    <property type="method" value="X-ray"/>
    <property type="resolution" value="3.37 A"/>
    <property type="chains" value="A=27-392"/>
</dbReference>
<dbReference type="PDB" id="6V2E">
    <property type="method" value="X-ray"/>
    <property type="resolution" value="1.83 A"/>
    <property type="chains" value="A=25-392"/>
</dbReference>
<dbReference type="PDB" id="6VLS">
    <property type="method" value="X-ray"/>
    <property type="resolution" value="3.20 A"/>
    <property type="chains" value="A/B/C/D=27-392"/>
</dbReference>
<dbReference type="PDB" id="6WBH">
    <property type="method" value="X-ray"/>
    <property type="resolution" value="2.46 A"/>
    <property type="chains" value="A=29-392"/>
</dbReference>
<dbReference type="PDB" id="6WBJ">
    <property type="method" value="X-ray"/>
    <property type="resolution" value="1.65 A"/>
    <property type="chains" value="A=29-392"/>
</dbReference>
<dbReference type="PDB" id="6WGZ">
    <property type="method" value="X-ray"/>
    <property type="resolution" value="2.20 A"/>
    <property type="chains" value="A=27-392"/>
</dbReference>
<dbReference type="PDB" id="6X91">
    <property type="method" value="X-ray"/>
    <property type="resolution" value="3.51 A"/>
    <property type="chains" value="A/B/C/D/E/F/G/H=27-392"/>
</dbReference>
<dbReference type="PDB" id="6XDS">
    <property type="method" value="X-ray"/>
    <property type="resolution" value="1.47 A"/>
    <property type="chains" value="A=27-392"/>
</dbReference>
<dbReference type="PDB" id="6XRX">
    <property type="method" value="X-ray"/>
    <property type="resolution" value="1.95 A"/>
    <property type="chains" value="A=27-393"/>
</dbReference>
<dbReference type="PDB" id="6YBJ">
    <property type="method" value="X-ray"/>
    <property type="resolution" value="2.50 A"/>
    <property type="chains" value="A=27-392"/>
</dbReference>
<dbReference type="PDB" id="6YBK">
    <property type="method" value="X-ray"/>
    <property type="resolution" value="2.00 A"/>
    <property type="chains" value="A=27-392"/>
</dbReference>
<dbReference type="PDB" id="6YBL">
    <property type="method" value="X-ray"/>
    <property type="resolution" value="2.10 A"/>
    <property type="chains" value="A=27-392"/>
</dbReference>
<dbReference type="PDB" id="6YSN">
    <property type="method" value="EM"/>
    <property type="resolution" value="3.00 A"/>
    <property type="chains" value="A/B/C/D=27-392"/>
</dbReference>
<dbReference type="PDB" id="6ZHO">
    <property type="method" value="X-ray"/>
    <property type="resolution" value="1.60 A"/>
    <property type="chains" value="A=26-392"/>
</dbReference>
<dbReference type="PDB" id="7B01">
    <property type="method" value="X-ray"/>
    <property type="resolution" value="2.80 A"/>
    <property type="chains" value="A=27-392"/>
</dbReference>
<dbReference type="PDB" id="7BG0">
    <property type="method" value="X-ray"/>
    <property type="resolution" value="2.89 A"/>
    <property type="chains" value="A/B/D/E=27-387"/>
</dbReference>
<dbReference type="PDB" id="7BXT">
    <property type="method" value="EM"/>
    <property type="resolution" value="4.20 A"/>
    <property type="chains" value="M/N=27-392"/>
</dbReference>
<dbReference type="PDB" id="7BY0">
    <property type="method" value="EM"/>
    <property type="resolution" value="4.50 A"/>
    <property type="chains" value="K/L=27-392"/>
</dbReference>
<dbReference type="PDB" id="7CY4">
    <property type="method" value="X-ray"/>
    <property type="resolution" value="2.20 A"/>
    <property type="chains" value="A=27-392"/>
</dbReference>
<dbReference type="PDB" id="7CY5">
    <property type="method" value="X-ray"/>
    <property type="resolution" value="2.20 A"/>
    <property type="chains" value="A=27-392"/>
</dbReference>
<dbReference type="PDB" id="7CY6">
    <property type="method" value="X-ray"/>
    <property type="resolution" value="2.10 A"/>
    <property type="chains" value="A=27-392"/>
</dbReference>
<dbReference type="PDB" id="7CY7">
    <property type="method" value="X-ray"/>
    <property type="resolution" value="2.15 A"/>
    <property type="chains" value="A=27-392"/>
</dbReference>
<dbReference type="PDB" id="7CY8">
    <property type="method" value="X-ray"/>
    <property type="resolution" value="2.40 A"/>
    <property type="chains" value="A=27-392"/>
</dbReference>
<dbReference type="PDB" id="7DD9">
    <property type="method" value="EM"/>
    <property type="resolution" value="2.40 A"/>
    <property type="chains" value="A/C/E/G=27-392"/>
</dbReference>
<dbReference type="PDB" id="7DDE">
    <property type="method" value="EM"/>
    <property type="resolution" value="2.26 A"/>
    <property type="chains" value="A/C/E/G/I/K/M/O/Q/S/V/X=27-392"/>
</dbReference>
<dbReference type="PDB" id="7E29">
    <property type="method" value="X-ray"/>
    <property type="resolution" value="2.30 A"/>
    <property type="chains" value="A=27-392"/>
</dbReference>
<dbReference type="PDB" id="7FBB">
    <property type="method" value="X-ray"/>
    <property type="resolution" value="2.31 A"/>
    <property type="chains" value="A/B=30-392"/>
</dbReference>
<dbReference type="PDB" id="7FBC">
    <property type="method" value="X-ray"/>
    <property type="resolution" value="1.85 A"/>
    <property type="chains" value="A=27-396"/>
</dbReference>
<dbReference type="PDB" id="7FBD">
    <property type="method" value="X-ray"/>
    <property type="resolution" value="2.85 A"/>
    <property type="chains" value="A/B=27-396"/>
</dbReference>
<dbReference type="PDB" id="7JHG">
    <property type="method" value="EM"/>
    <property type="resolution" value="3.47 A"/>
    <property type="chains" value="M=25-392"/>
</dbReference>
<dbReference type="PDB" id="7JHH">
    <property type="method" value="EM"/>
    <property type="resolution" value="3.92 A"/>
    <property type="chains" value="M=25-392"/>
</dbReference>
<dbReference type="PDB" id="7JIJ">
    <property type="method" value="X-ray"/>
    <property type="resolution" value="5.50 A"/>
    <property type="chains" value="M=25-392"/>
</dbReference>
<dbReference type="PDB" id="7JTR">
    <property type="method" value="X-ray"/>
    <property type="resolution" value="2.50 A"/>
    <property type="chains" value="A/C/E/G=27-395"/>
</dbReference>
<dbReference type="PDB" id="7K48">
    <property type="method" value="EM"/>
    <property type="resolution" value="3.60 A"/>
    <property type="chains" value="A/B/C/D=27-392"/>
</dbReference>
<dbReference type="PDB" id="7KD4">
    <property type="method" value="X-ray"/>
    <property type="resolution" value="1.31 A"/>
    <property type="chains" value="A/B=27-392"/>
</dbReference>
<dbReference type="PDB" id="7M74">
    <property type="method" value="EM"/>
    <property type="resolution" value="3.93 A"/>
    <property type="chains" value="M=25-392"/>
</dbReference>
<dbReference type="PDB" id="7MHW">
    <property type="method" value="X-ray"/>
    <property type="resolution" value="2.55 A"/>
    <property type="chains" value="A=27-392"/>
</dbReference>
<dbReference type="PDB" id="7MK7">
    <property type="method" value="X-ray"/>
    <property type="resolution" value="2.43 A"/>
    <property type="chains" value="A/B=32-382"/>
</dbReference>
<dbReference type="PDB" id="7MN5">
    <property type="method" value="EM"/>
    <property type="resolution" value="2.93 A"/>
    <property type="chains" value="B=27-392"/>
</dbReference>
<dbReference type="PDB" id="7MN6">
    <property type="method" value="EM"/>
    <property type="resolution" value="3.09 A"/>
    <property type="chains" value="B=27-392"/>
</dbReference>
<dbReference type="PDB" id="7MN8">
    <property type="method" value="EM"/>
    <property type="resolution" value="3.45 A"/>
    <property type="chains" value="B=27-392"/>
</dbReference>
<dbReference type="PDB" id="7MQ6">
    <property type="method" value="X-ray"/>
    <property type="resolution" value="2.37 A"/>
    <property type="chains" value="A=27-396"/>
</dbReference>
<dbReference type="PDB" id="7MQ7">
    <property type="method" value="X-ray"/>
    <property type="resolution" value="1.95 A"/>
    <property type="chains" value="A=27-396"/>
</dbReference>
<dbReference type="PDB" id="7NZM">
    <property type="method" value="EM"/>
    <property type="resolution" value="3.96 A"/>
    <property type="chains" value="C=26-396"/>
</dbReference>
<dbReference type="PDB" id="7O2W">
    <property type="method" value="EM"/>
    <property type="chains" value="B=27-392"/>
</dbReference>
<dbReference type="PDB" id="7OMM">
    <property type="method" value="EM"/>
    <property type="resolution" value="3.40 A"/>
    <property type="chains" value="C/D=33-392"/>
</dbReference>
<dbReference type="PDB" id="7OMT">
    <property type="method" value="X-ray"/>
    <property type="resolution" value="2.00 A"/>
    <property type="chains" value="A=33-392"/>
</dbReference>
<dbReference type="PDB" id="7P0F">
    <property type="method" value="X-ray"/>
    <property type="resolution" value="1.85 A"/>
    <property type="chains" value="A=26-392"/>
</dbReference>
<dbReference type="PDB" id="7P0I">
    <property type="method" value="X-ray"/>
    <property type="resolution" value="2.30 A"/>
    <property type="chains" value="A=26-392"/>
</dbReference>
<dbReference type="PDB" id="7P1G">
    <property type="method" value="EM"/>
    <property type="resolution" value="3.20 A"/>
    <property type="chains" value="K/L/M/N/O=27-392"/>
</dbReference>
<dbReference type="PDB" id="7P1H">
    <property type="method" value="EM"/>
    <property type="resolution" value="3.90 A"/>
    <property type="chains" value="A=27-392"/>
</dbReference>
<dbReference type="PDB" id="7RJ5">
    <property type="method" value="EM"/>
    <property type="resolution" value="7.00 A"/>
    <property type="chains" value="G=26-392"/>
</dbReference>
<dbReference type="PDB" id="7RW6">
    <property type="method" value="EM"/>
    <property type="resolution" value="2.55 A"/>
    <property type="chains" value="A/C=27-384"/>
</dbReference>
<dbReference type="PDB" id="7T31">
    <property type="method" value="X-ray"/>
    <property type="resolution" value="2.30 A"/>
    <property type="chains" value="A/B/C/D=27-393"/>
</dbReference>
<dbReference type="PDB" id="7TSZ">
    <property type="method" value="EM"/>
    <property type="resolution" value="4.50 A"/>
    <property type="chains" value="P=26-392"/>
</dbReference>
<dbReference type="PDB" id="7TT0">
    <property type="method" value="EM"/>
    <property type="resolution" value="4.30 A"/>
    <property type="chains" value="P=26-392"/>
</dbReference>
<dbReference type="PDB" id="7TT1">
    <property type="method" value="EM"/>
    <property type="resolution" value="4.30 A"/>
    <property type="chains" value="P=26-392"/>
</dbReference>
<dbReference type="PDB" id="7TT2">
    <property type="method" value="EM"/>
    <property type="resolution" value="4.20 A"/>
    <property type="chains" value="P=26-392"/>
</dbReference>
<dbReference type="PDB" id="7TT3">
    <property type="method" value="EM"/>
    <property type="resolution" value="4.30 A"/>
    <property type="chains" value="P=26-392"/>
</dbReference>
<dbReference type="PDB" id="7TT4">
    <property type="method" value="EM"/>
    <property type="resolution" value="4.20 A"/>
    <property type="chains" value="P=26-392"/>
</dbReference>
<dbReference type="PDB" id="7TT5">
    <property type="method" value="EM"/>
    <property type="resolution" value="4.30 A"/>
    <property type="chains" value="P=26-392"/>
</dbReference>
<dbReference type="PDB" id="7TT6">
    <property type="method" value="EM"/>
    <property type="resolution" value="4.30 A"/>
    <property type="chains" value="P=26-392"/>
</dbReference>
<dbReference type="PDB" id="7TT7">
    <property type="method" value="EM"/>
    <property type="resolution" value="4.80 A"/>
    <property type="chains" value="P=26-392"/>
</dbReference>
<dbReference type="PDB" id="7U0G">
    <property type="method" value="EM"/>
    <property type="resolution" value="2.60 A"/>
    <property type="chains" value="K/L/M=26-392"/>
</dbReference>
<dbReference type="PDB" id="7U0I">
    <property type="method" value="EM"/>
    <property type="resolution" value="2.60 A"/>
    <property type="chains" value="L/M=26-392"/>
</dbReference>
<dbReference type="PDB" id="7UAJ">
    <property type="method" value="X-ray"/>
    <property type="resolution" value="3.25 A"/>
    <property type="chains" value="A/B/C/D=27-392"/>
</dbReference>
<dbReference type="PDB" id="7VGQ">
    <property type="method" value="EM"/>
    <property type="resolution" value="4.00 A"/>
    <property type="chains" value="B=27-392"/>
</dbReference>
<dbReference type="PDB" id="7VH1">
    <property type="method" value="EM"/>
    <property type="resolution" value="4.20 A"/>
    <property type="chains" value="B=27-392"/>
</dbReference>
<dbReference type="PDB" id="7VQO">
    <property type="method" value="EM"/>
    <property type="resolution" value="2.19 A"/>
    <property type="chains" value="A/B/C/D=27-392"/>
</dbReference>
<dbReference type="PDB" id="7W3Z">
    <property type="method" value="EM"/>
    <property type="resolution" value="3.00 A"/>
    <property type="chains" value="A=27-392"/>
</dbReference>
<dbReference type="PDB" id="7W40">
    <property type="method" value="EM"/>
    <property type="resolution" value="3.00 A"/>
    <property type="chains" value="A=27-392"/>
</dbReference>
<dbReference type="PDB" id="7WR3">
    <property type="method" value="X-ray"/>
    <property type="resolution" value="1.87 A"/>
    <property type="chains" value="A/B=27-384"/>
</dbReference>
<dbReference type="PDB" id="7XMN">
    <property type="method" value="X-ray"/>
    <property type="resolution" value="2.30 A"/>
    <property type="chains" value="A=27-392"/>
</dbReference>
<dbReference type="PDB" id="7XQC">
    <property type="method" value="X-ray"/>
    <property type="resolution" value="2.80 A"/>
    <property type="chains" value="A/B/C/D=27-392"/>
</dbReference>
<dbReference type="PDB" id="7Y5Q">
    <property type="method" value="EM"/>
    <property type="resolution" value="3.80 A"/>
    <property type="chains" value="A/B=29-392"/>
</dbReference>
<dbReference type="PDB" id="7Z7H">
    <property type="method" value="EM"/>
    <property type="resolution" value="3.80 A"/>
    <property type="chains" value="F=27-392"/>
</dbReference>
<dbReference type="PDB" id="8AG0">
    <property type="method" value="X-ray"/>
    <property type="resolution" value="2.70 A"/>
    <property type="chains" value="B=27-387"/>
</dbReference>
<dbReference type="PDB" id="8AX5">
    <property type="method" value="X-ray"/>
    <property type="resolution" value="2.75 A"/>
    <property type="chains" value="A=26-392"/>
</dbReference>
<dbReference type="PDB" id="8AX6">
    <property type="method" value="X-ray"/>
    <property type="resolution" value="1.90 A"/>
    <property type="chains" value="A=26-392"/>
</dbReference>
<dbReference type="PDB" id="8AX7">
    <property type="method" value="X-ray"/>
    <property type="resolution" value="1.65 A"/>
    <property type="chains" value="A=26-392"/>
</dbReference>
<dbReference type="PDB" id="8AX8">
    <property type="method" value="X-ray"/>
    <property type="resolution" value="1.55 A"/>
    <property type="chains" value="A=24-392"/>
</dbReference>
<dbReference type="PDB" id="8AX9">
    <property type="method" value="X-ray"/>
    <property type="resolution" value="1.55 A"/>
    <property type="chains" value="A=24-392"/>
</dbReference>
<dbReference type="PDB" id="8C8F">
    <property type="method" value="X-ray"/>
    <property type="resolution" value="1.15 A"/>
    <property type="chains" value="A=1-396"/>
</dbReference>
<dbReference type="PDB" id="8CDY">
    <property type="method" value="X-ray"/>
    <property type="resolution" value="1.90 A"/>
    <property type="chains" value="A=27-392"/>
</dbReference>
<dbReference type="PDB" id="8CE0">
    <property type="method" value="X-ray"/>
    <property type="resolution" value="1.75 A"/>
    <property type="chains" value="A=24-396"/>
</dbReference>
<dbReference type="PDB" id="8CR9">
    <property type="method" value="EM"/>
    <property type="resolution" value="4.20 A"/>
    <property type="chains" value="C=29-385"/>
</dbReference>
<dbReference type="PDB" id="8CRB">
    <property type="method" value="EM"/>
    <property type="resolution" value="4.60 A"/>
    <property type="chains" value="C=29-385"/>
</dbReference>
<dbReference type="PDB" id="8DEI">
    <property type="method" value="X-ray"/>
    <property type="resolution" value="2.81 A"/>
    <property type="chains" value="A/B/C/D=27-392"/>
</dbReference>
<dbReference type="PDB" id="8DX4">
    <property type="method" value="X-ray"/>
    <property type="resolution" value="2.49 A"/>
    <property type="chains" value="A/B/C/D=27-392"/>
</dbReference>
<dbReference type="PDB" id="8EKX">
    <property type="method" value="X-ray"/>
    <property type="resolution" value="1.55 A"/>
    <property type="chains" value="A=27-392"/>
</dbReference>
<dbReference type="PDB" id="8EL0">
    <property type="method" value="X-ray"/>
    <property type="resolution" value="1.92 A"/>
    <property type="chains" value="A=27-392"/>
</dbReference>
<dbReference type="PDB" id="8EL1">
    <property type="method" value="X-ray"/>
    <property type="resolution" value="2.41 A"/>
    <property type="chains" value="A/B/C/D=27-392"/>
</dbReference>
<dbReference type="PDB" id="8ETB">
    <property type="method" value="X-ray"/>
    <property type="resolution" value="1.63 A"/>
    <property type="chains" value="A=27-392"/>
</dbReference>
<dbReference type="PDB" id="8F23">
    <property type="method" value="X-ray"/>
    <property type="resolution" value="1.93 A"/>
    <property type="chains" value="A=27-392"/>
</dbReference>
<dbReference type="PDB" id="8FNE">
    <property type="method" value="EM"/>
    <property type="resolution" value="3.90 A"/>
    <property type="chains" value="A/B/C/D/E/F/G/H=27-392"/>
</dbReference>
<dbReference type="PDB" id="8FV5">
    <property type="method" value="EM"/>
    <property type="resolution" value="4.21 A"/>
    <property type="chains" value="A/B/C/D/E/F/G/H/I/J/K/L/M/N/O/P/Q/R/S/T/U/V/W/X/Y/Z/a/b/c/d=27-392"/>
</dbReference>
<dbReference type="PDB" id="8G8W">
    <property type="method" value="EM"/>
    <property type="resolution" value="3.80 A"/>
    <property type="chains" value="B/C=33-392"/>
</dbReference>
<dbReference type="PDB" id="8GCR">
    <property type="method" value="EM"/>
    <property type="resolution" value="3.38 A"/>
    <property type="chains" value="A=27-396"/>
</dbReference>
<dbReference type="PDB" id="8H68">
    <property type="method" value="X-ray"/>
    <property type="resolution" value="2.20 A"/>
    <property type="chains" value="A=27-392"/>
</dbReference>
<dbReference type="PDB" id="8HGH">
    <property type="method" value="EM"/>
    <property type="resolution" value="4.16 A"/>
    <property type="chains" value="A/B=27-392"/>
</dbReference>
<dbReference type="PDB" id="8HLB">
    <property type="method" value="EM"/>
    <property type="resolution" value="3.63 A"/>
    <property type="chains" value="A=27-391"/>
</dbReference>
<dbReference type="PDB" id="8IIY">
    <property type="method" value="X-ray"/>
    <property type="resolution" value="2.15 A"/>
    <property type="chains" value="A=27-392"/>
</dbReference>
<dbReference type="PDB" id="8IIZ">
    <property type="method" value="X-ray"/>
    <property type="resolution" value="2.10 A"/>
    <property type="chains" value="A=27-392"/>
</dbReference>
<dbReference type="PDB" id="8JI0">
    <property type="method" value="EM"/>
    <property type="resolution" value="3.00 A"/>
    <property type="chains" value="A=27-392"/>
</dbReference>
<dbReference type="PDB" id="8JYX">
    <property type="method" value="X-ray"/>
    <property type="resolution" value="2.35 A"/>
    <property type="chains" value="A/B=27-392"/>
</dbReference>
<dbReference type="PDB" id="8QSO">
    <property type="method" value="X-ray"/>
    <property type="resolution" value="2.11 A"/>
    <property type="chains" value="A=27-392"/>
</dbReference>
<dbReference type="PDB" id="8SBU">
    <property type="method" value="X-ray"/>
    <property type="resolution" value="2.20 A"/>
    <property type="chains" value="A/B=29-396"/>
</dbReference>
<dbReference type="PDB" id="8SOJ">
    <property type="method" value="EM"/>
    <property type="resolution" value="3.80 A"/>
    <property type="chains" value="A=27-392"/>
</dbReference>
<dbReference type="PDB" id="8SOK">
    <property type="method" value="EM"/>
    <property type="resolution" value="4.10 A"/>
    <property type="chains" value="A=27-392"/>
</dbReference>
<dbReference type="PDB" id="8SQA">
    <property type="method" value="EM"/>
    <property type="resolution" value="4.20 A"/>
    <property type="chains" value="F=26-392"/>
</dbReference>
<dbReference type="PDB" id="8SQB">
    <property type="method" value="EM"/>
    <property type="resolution" value="3.80 A"/>
    <property type="chains" value="F=26-392"/>
</dbReference>
<dbReference type="PDB" id="8SVY">
    <property type="method" value="X-ray"/>
    <property type="resolution" value="1.47 A"/>
    <property type="chains" value="A=27-392"/>
</dbReference>
<dbReference type="PDB" id="8T2I">
    <property type="method" value="EM"/>
    <property type="resolution" value="10.40 A"/>
    <property type="chains" value="M=27-392"/>
</dbReference>
<dbReference type="PDB" id="8T6F">
    <property type="method" value="X-ray"/>
    <property type="resolution" value="1.56 A"/>
    <property type="chains" value="A=27-392"/>
</dbReference>
<dbReference type="PDB" id="8TLV">
    <property type="method" value="X-ray"/>
    <property type="resolution" value="2.66 A"/>
    <property type="chains" value="A=27-392"/>
</dbReference>
<dbReference type="PDB" id="8TLW">
    <property type="method" value="X-ray"/>
    <property type="resolution" value="2.11 A"/>
    <property type="chains" value="A=27-392"/>
</dbReference>
<dbReference type="PDB" id="8TLX">
    <property type="method" value="X-ray"/>
    <property type="resolution" value="2.10 A"/>
    <property type="chains" value="A=27-392"/>
</dbReference>
<dbReference type="PDB" id="8TNP">
    <property type="method" value="EM"/>
    <property type="resolution" value="3.30 A"/>
    <property type="chains" value="C=27-396"/>
</dbReference>
<dbReference type="PDB" id="8TNQ">
    <property type="method" value="EM"/>
    <property type="resolution" value="2.41 A"/>
    <property type="chains" value="C=27-396"/>
</dbReference>
<dbReference type="PDB" id="8TNR">
    <property type="method" value="EM"/>
    <property type="resolution" value="2.50 A"/>
    <property type="chains" value="C=27-396"/>
</dbReference>
<dbReference type="PDB" id="8VG0">
    <property type="method" value="EM"/>
    <property type="resolution" value="3.07 A"/>
    <property type="chains" value="T=27-392"/>
</dbReference>
<dbReference type="PDB" id="8VG1">
    <property type="method" value="EM"/>
    <property type="resolution" value="2.48 A"/>
    <property type="chains" value="T=27-392"/>
</dbReference>
<dbReference type="PDB" id="8VRS">
    <property type="method" value="X-ray"/>
    <property type="resolution" value="2.47 A"/>
    <property type="chains" value="A/B=27-392"/>
</dbReference>
<dbReference type="PDB" id="8X7V">
    <property type="method" value="EM"/>
    <property type="resolution" value="3.01 A"/>
    <property type="chains" value="A=27-392"/>
</dbReference>
<dbReference type="PDB" id="8X7W">
    <property type="method" value="EM"/>
    <property type="resolution" value="3.36 A"/>
    <property type="chains" value="A/D=27-392"/>
</dbReference>
<dbReference type="PDB" id="8YBE">
    <property type="method" value="EM"/>
    <property type="resolution" value="2.30 A"/>
    <property type="chains" value="A=27-396"/>
</dbReference>
<dbReference type="PDB" id="8ZHS">
    <property type="method" value="X-ray"/>
    <property type="resolution" value="2.40 A"/>
    <property type="chains" value="A/B=27-392"/>
</dbReference>
<dbReference type="PDB" id="8ZMR">
    <property type="method" value="EM"/>
    <property type="resolution" value="3.50 A"/>
    <property type="chains" value="A=28-391"/>
</dbReference>
<dbReference type="PDB" id="8ZMS">
    <property type="method" value="EM"/>
    <property type="resolution" value="3.70 A"/>
    <property type="chains" value="A=28-391"/>
</dbReference>
<dbReference type="PDB" id="8ZQE">
    <property type="method" value="EM"/>
    <property type="resolution" value="2.90 A"/>
    <property type="chains" value="R=25-392"/>
</dbReference>
<dbReference type="PDB" id="9BCG">
    <property type="method" value="X-ray"/>
    <property type="resolution" value="1.90 A"/>
    <property type="chains" value="A=26-392"/>
</dbReference>
<dbReference type="PDB" id="9BDE">
    <property type="method" value="EM"/>
    <property type="resolution" value="4.18 A"/>
    <property type="chains" value="B=27-384"/>
</dbReference>
<dbReference type="PDB" id="9BOI">
    <property type="method" value="EM"/>
    <property type="resolution" value="3.22 A"/>
    <property type="chains" value="A=29-391"/>
</dbReference>
<dbReference type="PDB" id="9CER">
    <property type="method" value="EM"/>
    <property type="resolution" value="4.70 A"/>
    <property type="chains" value="P=27-392"/>
</dbReference>
<dbReference type="PDB" id="9CES">
    <property type="method" value="EM"/>
    <property type="resolution" value="3.28 A"/>
    <property type="chains" value="P=27-392"/>
</dbReference>
<dbReference type="PDB" id="9CET">
    <property type="method" value="EM"/>
    <property type="resolution" value="3.00 A"/>
    <property type="chains" value="P=27-392"/>
</dbReference>
<dbReference type="PDB" id="9CEU">
    <property type="method" value="EM"/>
    <property type="resolution" value="3.29 A"/>
    <property type="chains" value="P=27-392"/>
</dbReference>
<dbReference type="PDB" id="9CEV">
    <property type="method" value="EM"/>
    <property type="resolution" value="3.26 A"/>
    <property type="chains" value="P=27-392"/>
</dbReference>
<dbReference type="PDB" id="9CEW">
    <property type="method" value="EM"/>
    <property type="resolution" value="2.88 A"/>
    <property type="chains" value="P=27-392"/>
</dbReference>
<dbReference type="PDB" id="9CEX">
    <property type="method" value="EM"/>
    <property type="resolution" value="3.27 A"/>
    <property type="chains" value="P=27-392"/>
</dbReference>
<dbReference type="PDB" id="9CEY">
    <property type="method" value="EM"/>
    <property type="resolution" value="3.22 A"/>
    <property type="chains" value="P=27-392"/>
</dbReference>
<dbReference type="PDB" id="9CEZ">
    <property type="method" value="EM"/>
    <property type="resolution" value="3.41 A"/>
    <property type="chains" value="P=27-392"/>
</dbReference>
<dbReference type="PDB" id="9CF0">
    <property type="method" value="EM"/>
    <property type="resolution" value="3.47 A"/>
    <property type="chains" value="P=27-392"/>
</dbReference>
<dbReference type="PDB" id="9CF1">
    <property type="method" value="EM"/>
    <property type="resolution" value="3.52 A"/>
    <property type="chains" value="P=27-392"/>
</dbReference>
<dbReference type="PDB" id="9CF2">
    <property type="method" value="EM"/>
    <property type="resolution" value="3.15 A"/>
    <property type="chains" value="P=27-392"/>
</dbReference>
<dbReference type="PDB" id="9CF3">
    <property type="method" value="EM"/>
    <property type="resolution" value="3.20 A"/>
    <property type="chains" value="P=27-392"/>
</dbReference>
<dbReference type="PDB" id="9CLC">
    <property type="method" value="X-ray"/>
    <property type="resolution" value="1.48 A"/>
    <property type="chains" value="A=27-396"/>
</dbReference>
<dbReference type="PDB" id="9CLD">
    <property type="method" value="X-ray"/>
    <property type="resolution" value="1.58 A"/>
    <property type="chains" value="A=27-396"/>
</dbReference>
<dbReference type="PDB" id="9DH3">
    <property type="method" value="EM"/>
    <property type="resolution" value="3.76 A"/>
    <property type="chains" value="A/B/C/D=27-392"/>
</dbReference>
<dbReference type="PDB" id="9HDO">
    <property type="method" value="EM"/>
    <property type="resolution" value="2.30 A"/>
    <property type="chains" value="A=29-392"/>
</dbReference>
<dbReference type="PDB" id="9HDP">
    <property type="method" value="EM"/>
    <property type="resolution" value="2.50 A"/>
    <property type="chains" value="A=29-392"/>
</dbReference>
<dbReference type="PDB" id="9HDQ">
    <property type="method" value="EM"/>
    <property type="resolution" value="2.45 A"/>
    <property type="chains" value="A=29-392"/>
</dbReference>
<dbReference type="PDB" id="9HDR">
    <property type="method" value="EM"/>
    <property type="resolution" value="3.10 A"/>
    <property type="chains" value="A=29-392"/>
</dbReference>
<dbReference type="PDBsum" id="1A7L"/>
<dbReference type="PDBsum" id="1ANF"/>
<dbReference type="PDBsum" id="1DMB"/>
<dbReference type="PDBsum" id="1EZ9"/>
<dbReference type="PDBsum" id="1EZO"/>
<dbReference type="PDBsum" id="1EZP"/>
<dbReference type="PDBsum" id="1FQA"/>
<dbReference type="PDBsum" id="1FQB"/>
<dbReference type="PDBsum" id="1FQC"/>
<dbReference type="PDBsum" id="1FQD"/>
<dbReference type="PDBsum" id="1HSJ"/>
<dbReference type="PDBsum" id="1IUD"/>
<dbReference type="PDBsum" id="1JVX"/>
<dbReference type="PDBsum" id="1JVY"/>
<dbReference type="PDBsum" id="1JW4"/>
<dbReference type="PDBsum" id="1JW5"/>
<dbReference type="PDBsum" id="1LAX"/>
<dbReference type="PDBsum" id="1LLS"/>
<dbReference type="PDBsum" id="1MDP"/>
<dbReference type="PDBsum" id="1MDQ"/>
<dbReference type="PDBsum" id="1MG1"/>
<dbReference type="PDBsum" id="1MH3"/>
<dbReference type="PDBsum" id="1MH4"/>
<dbReference type="PDBsum" id="1MPB"/>
<dbReference type="PDBsum" id="1MPC"/>
<dbReference type="PDBsum" id="1MPD"/>
<dbReference type="PDBsum" id="1N3W"/>
<dbReference type="PDBsum" id="1N3X"/>
<dbReference type="PDBsum" id="1NL5"/>
<dbReference type="PDBsum" id="1NMU"/>
<dbReference type="PDBsum" id="1OMP"/>
<dbReference type="PDBsum" id="1PEB"/>
<dbReference type="PDBsum" id="1R6Z"/>
<dbReference type="PDBsum" id="1SVX"/>
<dbReference type="PDBsum" id="1T0K"/>
<dbReference type="PDBsum" id="1Y4C"/>
<dbReference type="PDBsum" id="1YTV"/>
<dbReference type="PDBsum" id="1ZIU"/>
<dbReference type="PDBsum" id="1ZJL"/>
<dbReference type="PDBsum" id="1ZKB"/>
<dbReference type="PDBsum" id="1ZMG"/>
<dbReference type="PDBsum" id="2D21"/>
<dbReference type="PDBsum" id="2H25"/>
<dbReference type="PDBsum" id="2KLF"/>
<dbReference type="PDBsum" id="2MV0"/>
<dbReference type="PDBsum" id="2N44"/>
<dbReference type="PDBsum" id="2N45"/>
<dbReference type="PDBsum" id="2NVU"/>
<dbReference type="PDBsum" id="2OBG"/>
<dbReference type="PDBsum" id="2OK2"/>
<dbReference type="PDBsum" id="2R6G"/>
<dbReference type="PDBsum" id="2V93"/>
<dbReference type="PDBsum" id="2VGQ"/>
<dbReference type="PDBsum" id="2XZ3"/>
<dbReference type="PDBsum" id="2ZXT"/>
<dbReference type="PDBsum" id="3A3C"/>
<dbReference type="PDBsum" id="3C4M"/>
<dbReference type="PDBsum" id="3CSB"/>
<dbReference type="PDBsum" id="3CSG"/>
<dbReference type="PDBsum" id="3D4C"/>
<dbReference type="PDBsum" id="3D4G"/>
<dbReference type="PDBsum" id="3DM0"/>
<dbReference type="PDBsum" id="3EF7"/>
<dbReference type="PDBsum" id="3EHS"/>
<dbReference type="PDBsum" id="3EHT"/>
<dbReference type="PDBsum" id="3EHU"/>
<dbReference type="PDBsum" id="3F5F"/>
<dbReference type="PDBsum" id="3G7V"/>
<dbReference type="PDBsum" id="3G7W"/>
<dbReference type="PDBsum" id="3H3G"/>
<dbReference type="PDBsum" id="3H4Z"/>
<dbReference type="PDBsum" id="3HPI"/>
<dbReference type="PDBsum" id="3HST"/>
<dbReference type="PDBsum" id="3IO4"/>
<dbReference type="PDBsum" id="3IO6"/>
<dbReference type="PDBsum" id="3IOR"/>
<dbReference type="PDBsum" id="3IOT"/>
<dbReference type="PDBsum" id="3IOU"/>
<dbReference type="PDBsum" id="3IOV"/>
<dbReference type="PDBsum" id="3IOW"/>
<dbReference type="PDBsum" id="3J9P"/>
<dbReference type="PDBsum" id="3KJT"/>
<dbReference type="PDBsum" id="3L2J"/>
<dbReference type="PDBsum" id="3LBS"/>
<dbReference type="PDBsum" id="3LC8"/>
<dbReference type="PDBsum" id="3MBP"/>
<dbReference type="PDBsum" id="3MP1"/>
<dbReference type="PDBsum" id="3MP6"/>
<dbReference type="PDBsum" id="3MP8"/>
<dbReference type="PDBsum" id="3MQ9"/>
<dbReference type="PDBsum" id="3N93"/>
<dbReference type="PDBsum" id="3N94"/>
<dbReference type="PDBsum" id="3N95"/>
<dbReference type="PDBsum" id="3N96"/>
<dbReference type="PDBsum" id="3O3U"/>
<dbReference type="PDBsum" id="3OAI"/>
<dbReference type="PDBsum" id="3OB4"/>
<dbReference type="PDBsum" id="3OSQ"/>
<dbReference type="PDBsum" id="3OSR"/>
<dbReference type="PDBsum" id="3PGF"/>
<dbReference type="PDBsum" id="3PUV"/>
<dbReference type="PDBsum" id="3PUW"/>
<dbReference type="PDBsum" id="3PUX"/>
<dbReference type="PDBsum" id="3PUY"/>
<dbReference type="PDBsum" id="3PUZ"/>
<dbReference type="PDBsum" id="3PV0"/>
<dbReference type="PDBsum" id="3PY7"/>
<dbReference type="PDBsum" id="3Q25"/>
<dbReference type="PDBsum" id="3Q26"/>
<dbReference type="PDBsum" id="3Q27"/>
<dbReference type="PDBsum" id="3Q28"/>
<dbReference type="PDBsum" id="3Q29"/>
<dbReference type="PDBsum" id="3RLF"/>
<dbReference type="PDBsum" id="3RUM"/>
<dbReference type="PDBsum" id="3SER"/>
<dbReference type="PDBsum" id="3SES"/>
<dbReference type="PDBsum" id="3SET"/>
<dbReference type="PDBsum" id="3SEU"/>
<dbReference type="PDBsum" id="3SEV"/>
<dbReference type="PDBsum" id="3SEW"/>
<dbReference type="PDBsum" id="3SEX"/>
<dbReference type="PDBsum" id="3SEY"/>
<dbReference type="PDBsum" id="3VFJ"/>
<dbReference type="PDBsum" id="3W15"/>
<dbReference type="PDBsum" id="3WAI"/>
<dbReference type="PDBsum" id="3WOA"/>
<dbReference type="PDBsum" id="4B3N"/>
<dbReference type="PDBsum" id="4BL8"/>
<dbReference type="PDBsum" id="4BL9"/>
<dbReference type="PDBsum" id="4BLA"/>
<dbReference type="PDBsum" id="4BLB"/>
<dbReference type="PDBsum" id="4BLD"/>
<dbReference type="PDBsum" id="4DXB"/>
<dbReference type="PDBsum" id="4DXC"/>
<dbReference type="PDBsum" id="4EDQ"/>
<dbReference type="PDBsum" id="4EGC"/>
<dbReference type="PDBsum" id="4EXK"/>
<dbReference type="PDBsum" id="4FE8"/>
<dbReference type="PDBsum" id="4FEB"/>
<dbReference type="PDBsum" id="4FEC"/>
<dbReference type="PDBsum" id="4FED"/>
<dbReference type="PDBsum" id="4GIZ"/>
<dbReference type="PDBsum" id="4GLI"/>
<dbReference type="PDBsum" id="4IFP"/>
<dbReference type="PDBsum" id="4IKM"/>
<dbReference type="PDBsum" id="4IRL"/>
<dbReference type="PDBsum" id="4JBZ"/>
<dbReference type="PDBsum" id="4JKM"/>
<dbReference type="PDBsum" id="4KEG"/>
<dbReference type="PDBsum" id="4KHZ"/>
<dbReference type="PDBsum" id="4KI0"/>
<dbReference type="PDBsum" id="4KV3"/>
<dbReference type="PDBsum" id="4KYC"/>
<dbReference type="PDBsum" id="4KYD"/>
<dbReference type="PDBsum" id="4KYE"/>
<dbReference type="PDBsum" id="4LOG"/>
<dbReference type="PDBsum" id="4MBP"/>
<dbReference type="PDBsum" id="4MY2"/>
<dbReference type="PDBsum" id="4N4X"/>
<dbReference type="PDBsum" id="4NDZ"/>
<dbReference type="PDBsum" id="4NUF"/>
<dbReference type="PDBsum" id="4O2X"/>
<dbReference type="PDBsum" id="4OGM"/>
<dbReference type="PDBsum" id="4PE2"/>
<dbReference type="PDBsum" id="4PQK"/>
<dbReference type="PDBsum" id="4QSZ"/>
<dbReference type="PDBsum" id="4QVH"/>
<dbReference type="PDBsum" id="4R0Y"/>
<dbReference type="PDBsum" id="4RG5"/>
<dbReference type="PDBsum" id="4RWF"/>
<dbReference type="PDBsum" id="4RWG"/>
<dbReference type="PDBsum" id="4TSM"/>
<dbReference type="PDBsum" id="4WJV"/>
<dbReference type="PDBsum" id="4WMS"/>
<dbReference type="PDBsum" id="4WMT"/>
<dbReference type="PDBsum" id="4WMU"/>
<dbReference type="PDBsum" id="4WMV"/>
<dbReference type="PDBsum" id="4WMW"/>
<dbReference type="PDBsum" id="4WMX"/>
<dbReference type="PDBsum" id="4WRN"/>
<dbReference type="PDBsum" id="4WTH"/>
<dbReference type="PDBsum" id="4WVG"/>
<dbReference type="PDBsum" id="4WVH"/>
<dbReference type="PDBsum" id="4WVI"/>
<dbReference type="PDBsum" id="4WVJ"/>
<dbReference type="PDBsum" id="4XA2"/>
<dbReference type="PDBsum" id="4XAJ"/>
<dbReference type="PDBsum" id="4XHS"/>
<dbReference type="PDBsum" id="4XR8"/>
<dbReference type="PDBsum" id="4XZS"/>
<dbReference type="PDBsum" id="4XZV"/>
<dbReference type="PDBsum" id="5AQ9"/>
<dbReference type="PDBsum" id="5AZ6"/>
<dbReference type="PDBsum" id="5AZ7"/>
<dbReference type="PDBsum" id="5AZ8"/>
<dbReference type="PDBsum" id="5AZ9"/>
<dbReference type="PDBsum" id="5AZA"/>
<dbReference type="PDBsum" id="5B3W"/>
<dbReference type="PDBsum" id="5B3X"/>
<dbReference type="PDBsum" id="5B3Y"/>
<dbReference type="PDBsum" id="5B3Z"/>
<dbReference type="PDBsum" id="5BJZ"/>
<dbReference type="PDBsum" id="5BK1"/>
<dbReference type="PDBsum" id="5BK2"/>
<dbReference type="PDBsum" id="5BMY"/>
<dbReference type="PDBsum" id="5C7R"/>
<dbReference type="PDBsum" id="5CBN"/>
<dbReference type="PDBsum" id="5CFV"/>
<dbReference type="PDBsum" id="5DFM"/>
<dbReference type="PDBsum" id="5DIS"/>
<dbReference type="PDBsum" id="5E24"/>
<dbReference type="PDBsum" id="5E7U"/>
<dbReference type="PDBsum" id="5EDU"/>
<dbReference type="PDBsum" id="5FIO"/>
<dbReference type="PDBsum" id="5FSG"/>
<dbReference type="PDBsum" id="5GPP"/>
<dbReference type="PDBsum" id="5GPQ"/>
<dbReference type="PDBsum" id="5GRU"/>
<dbReference type="PDBsum" id="5GS2"/>
<dbReference type="PDBsum" id="5GXT"/>
<dbReference type="PDBsum" id="5GXV"/>
<dbReference type="PDBsum" id="5H7N"/>
<dbReference type="PDBsum" id="5H7Q"/>
<dbReference type="PDBsum" id="5HZ7"/>
<dbReference type="PDBsum" id="5HZV"/>
<dbReference type="PDBsum" id="5HZW"/>
<dbReference type="PDBsum" id="5I04"/>
<dbReference type="PDBsum" id="5I69"/>
<dbReference type="PDBsum" id="5IHJ"/>
<dbReference type="PDBsum" id="5II5"/>
<dbReference type="PDBsum" id="5IIC"/>
<dbReference type="PDBsum" id="5IQZ"/>
<dbReference type="PDBsum" id="5JJ4"/>
<dbReference type="PDBsum" id="5JST"/>
<dbReference type="PDBsum" id="5JTQ"/>
<dbReference type="PDBsum" id="5JTR"/>
<dbReference type="PDBsum" id="5LDF"/>
<dbReference type="PDBsum" id="5LEL"/>
<dbReference type="PDBsum" id="5LEM"/>
<dbReference type="PDBsum" id="5M13"/>
<dbReference type="PDBsum" id="5M14"/>
<dbReference type="PDBsum" id="5M15"/>
<dbReference type="PDBsum" id="5MM3"/>
<dbReference type="PDBsum" id="5OSQ"/>
<dbReference type="PDBsum" id="5T03"/>
<dbReference type="PDBsum" id="5T05"/>
<dbReference type="PDBsum" id="5T0A"/>
<dbReference type="PDBsum" id="5TTD"/>
<dbReference type="PDBsum" id="5V6Y"/>
<dbReference type="PDBsum" id="5VAW"/>
<dbReference type="PDBsum" id="5W0R"/>
<dbReference type="PDBsum" id="5W0U"/>
<dbReference type="PDBsum" id="5W0Z"/>
<dbReference type="PDBsum" id="5W1C"/>
<dbReference type="PDBsum" id="5WPZ"/>
<dbReference type="PDBsum" id="5WQ6"/>
<dbReference type="PDBsum" id="5Y2G"/>
<dbReference type="PDBsum" id="5YGP"/>
<dbReference type="PDBsum" id="5YGS"/>
<dbReference type="PDBsum" id="5Z0R"/>
<dbReference type="PDBsum" id="5Z0V"/>
<dbReference type="PDBsum" id="5ZCA"/>
<dbReference type="PDBsum" id="5ZNY"/>
<dbReference type="PDBsum" id="5ZNZ"/>
<dbReference type="PDBsum" id="5ZR0"/>
<dbReference type="PDBsum" id="6ANV"/>
<dbReference type="PDBsum" id="6APX"/>
<dbReference type="PDBsum" id="6BUZ"/>
<dbReference type="PDBsum" id="6CXS"/>
<dbReference type="PDBsum" id="6D1U"/>
<dbReference type="PDBsum" id="6D65"/>
<dbReference type="PDBsum" id="6D66"/>
<dbReference type="PDBsum" id="6D67"/>
<dbReference type="PDBsum" id="6DD5"/>
<dbReference type="PDBsum" id="6DKS"/>
<dbReference type="PDBsum" id="6DM8"/>
<dbReference type="PDBsum" id="6EG2"/>
<dbReference type="PDBsum" id="6EG3"/>
<dbReference type="PDBsum" id="6EQZ"/>
<dbReference type="PDBsum" id="6HD8"/>
<dbReference type="PDBsum" id="6HD9"/>
<dbReference type="PDBsum" id="6HDA"/>
<dbReference type="PDBsum" id="6HDB"/>
<dbReference type="PDBsum" id="6HDC"/>
<dbReference type="PDBsum" id="6I4Y"/>
<dbReference type="PDBsum" id="6K7D"/>
<dbReference type="PDBsum" id="6K7E"/>
<dbReference type="PDBsum" id="6K7F"/>
<dbReference type="PDBsum" id="6KEA"/>
<dbReference type="PDBsum" id="6KI0"/>
<dbReference type="PDBsum" id="6KXG"/>
<dbReference type="PDBsum" id="6LES"/>
<dbReference type="PDBsum" id="6LF3"/>
<dbReference type="PDBsum" id="6M4V"/>
<dbReference type="PDBsum" id="6M4W"/>
<dbReference type="PDBsum" id="6N84"/>
<dbReference type="PDBsum" id="6N85"/>
<dbReference type="PDBsum" id="6NDJ"/>
<dbReference type="PDBsum" id="6OB5"/>
<dbReference type="PDBsum" id="6P6W"/>
<dbReference type="PDBsum" id="6QGD"/>
<dbReference type="PDBsum" id="6QUG"/>
<dbReference type="PDBsum" id="6QXJ"/>
<dbReference type="PDBsum" id="6QYK"/>
<dbReference type="PDBsum" id="6QYL"/>
<dbReference type="PDBsum" id="6QYN"/>
<dbReference type="PDBsum" id="6QYO"/>
<dbReference type="PDBsum" id="6QZ7"/>
<dbReference type="PDBsum" id="6SIV"/>
<dbReference type="PDBsum" id="6SJA"/>
<dbReference type="PDBsum" id="6SLM"/>
<dbReference type="PDBsum" id="6SMV"/>
<dbReference type="PDBsum" id="6SWR"/>
<dbReference type="PDBsum" id="6TZC"/>
<dbReference type="PDBsum" id="6USM"/>
<dbReference type="PDBsum" id="6V2E"/>
<dbReference type="PDBsum" id="6VLS"/>
<dbReference type="PDBsum" id="6WBH"/>
<dbReference type="PDBsum" id="6WBJ"/>
<dbReference type="PDBsum" id="6WGZ"/>
<dbReference type="PDBsum" id="6X91"/>
<dbReference type="PDBsum" id="6XDS"/>
<dbReference type="PDBsum" id="6XRX"/>
<dbReference type="PDBsum" id="6YBJ"/>
<dbReference type="PDBsum" id="6YBK"/>
<dbReference type="PDBsum" id="6YBL"/>
<dbReference type="PDBsum" id="6YSN"/>
<dbReference type="PDBsum" id="6ZHO"/>
<dbReference type="PDBsum" id="7B01"/>
<dbReference type="PDBsum" id="7BG0"/>
<dbReference type="PDBsum" id="7BXT"/>
<dbReference type="PDBsum" id="7BY0"/>
<dbReference type="PDBsum" id="7CY4"/>
<dbReference type="PDBsum" id="7CY5"/>
<dbReference type="PDBsum" id="7CY6"/>
<dbReference type="PDBsum" id="7CY7"/>
<dbReference type="PDBsum" id="7CY8"/>
<dbReference type="PDBsum" id="7DD9"/>
<dbReference type="PDBsum" id="7DDE"/>
<dbReference type="PDBsum" id="7E29"/>
<dbReference type="PDBsum" id="7FBB"/>
<dbReference type="PDBsum" id="7FBC"/>
<dbReference type="PDBsum" id="7FBD"/>
<dbReference type="PDBsum" id="7JHG"/>
<dbReference type="PDBsum" id="7JHH"/>
<dbReference type="PDBsum" id="7JIJ"/>
<dbReference type="PDBsum" id="7JTR"/>
<dbReference type="PDBsum" id="7K48"/>
<dbReference type="PDBsum" id="7KD4"/>
<dbReference type="PDBsum" id="7M74"/>
<dbReference type="PDBsum" id="7MHW"/>
<dbReference type="PDBsum" id="7MK7"/>
<dbReference type="PDBsum" id="7MN5"/>
<dbReference type="PDBsum" id="7MN6"/>
<dbReference type="PDBsum" id="7MN8"/>
<dbReference type="PDBsum" id="7MQ6"/>
<dbReference type="PDBsum" id="7MQ7"/>
<dbReference type="PDBsum" id="7NZM"/>
<dbReference type="PDBsum" id="7O2W"/>
<dbReference type="PDBsum" id="7OMM"/>
<dbReference type="PDBsum" id="7OMT"/>
<dbReference type="PDBsum" id="7P0F"/>
<dbReference type="PDBsum" id="7P0I"/>
<dbReference type="PDBsum" id="7P1G"/>
<dbReference type="PDBsum" id="7P1H"/>
<dbReference type="PDBsum" id="7RJ5"/>
<dbReference type="PDBsum" id="7RW6"/>
<dbReference type="PDBsum" id="7T31"/>
<dbReference type="PDBsum" id="7TSZ"/>
<dbReference type="PDBsum" id="7TT0"/>
<dbReference type="PDBsum" id="7TT1"/>
<dbReference type="PDBsum" id="7TT2"/>
<dbReference type="PDBsum" id="7TT3"/>
<dbReference type="PDBsum" id="7TT4"/>
<dbReference type="PDBsum" id="7TT5"/>
<dbReference type="PDBsum" id="7TT6"/>
<dbReference type="PDBsum" id="7TT7"/>
<dbReference type="PDBsum" id="7U0G"/>
<dbReference type="PDBsum" id="7U0I"/>
<dbReference type="PDBsum" id="7UAJ"/>
<dbReference type="PDBsum" id="7VGQ"/>
<dbReference type="PDBsum" id="7VH1"/>
<dbReference type="PDBsum" id="7VQO"/>
<dbReference type="PDBsum" id="7W3Z"/>
<dbReference type="PDBsum" id="7W40"/>
<dbReference type="PDBsum" id="7WR3"/>
<dbReference type="PDBsum" id="7XMN"/>
<dbReference type="PDBsum" id="7XQC"/>
<dbReference type="PDBsum" id="7Y5Q"/>
<dbReference type="PDBsum" id="7Z7H"/>
<dbReference type="PDBsum" id="8AG0"/>
<dbReference type="PDBsum" id="8AX5"/>
<dbReference type="PDBsum" id="8AX6"/>
<dbReference type="PDBsum" id="8AX7"/>
<dbReference type="PDBsum" id="8AX8"/>
<dbReference type="PDBsum" id="8AX9"/>
<dbReference type="PDBsum" id="8C8F"/>
<dbReference type="PDBsum" id="8CDY"/>
<dbReference type="PDBsum" id="8CE0"/>
<dbReference type="PDBsum" id="8CR9"/>
<dbReference type="PDBsum" id="8CRB"/>
<dbReference type="PDBsum" id="8DEI"/>
<dbReference type="PDBsum" id="8DX4"/>
<dbReference type="PDBsum" id="8EKX"/>
<dbReference type="PDBsum" id="8EL0"/>
<dbReference type="PDBsum" id="8EL1"/>
<dbReference type="PDBsum" id="8ETB"/>
<dbReference type="PDBsum" id="8F23"/>
<dbReference type="PDBsum" id="8FNE"/>
<dbReference type="PDBsum" id="8FV5"/>
<dbReference type="PDBsum" id="8G8W"/>
<dbReference type="PDBsum" id="8GCR"/>
<dbReference type="PDBsum" id="8H68"/>
<dbReference type="PDBsum" id="8HGH"/>
<dbReference type="PDBsum" id="8HLB"/>
<dbReference type="PDBsum" id="8IIY"/>
<dbReference type="PDBsum" id="8IIZ"/>
<dbReference type="PDBsum" id="8JI0"/>
<dbReference type="PDBsum" id="8JYX"/>
<dbReference type="PDBsum" id="8QSO"/>
<dbReference type="PDBsum" id="8SBU"/>
<dbReference type="PDBsum" id="8SOJ"/>
<dbReference type="PDBsum" id="8SOK"/>
<dbReference type="PDBsum" id="8SQA"/>
<dbReference type="PDBsum" id="8SQB"/>
<dbReference type="PDBsum" id="8SVY"/>
<dbReference type="PDBsum" id="8T2I"/>
<dbReference type="PDBsum" id="8T6F"/>
<dbReference type="PDBsum" id="8TLV"/>
<dbReference type="PDBsum" id="8TLW"/>
<dbReference type="PDBsum" id="8TLX"/>
<dbReference type="PDBsum" id="8TNP"/>
<dbReference type="PDBsum" id="8TNQ"/>
<dbReference type="PDBsum" id="8TNR"/>
<dbReference type="PDBsum" id="8VG0"/>
<dbReference type="PDBsum" id="8VG1"/>
<dbReference type="PDBsum" id="8VRS"/>
<dbReference type="PDBsum" id="8X7V"/>
<dbReference type="PDBsum" id="8X7W"/>
<dbReference type="PDBsum" id="8YBE"/>
<dbReference type="PDBsum" id="8ZHS"/>
<dbReference type="PDBsum" id="8ZMR"/>
<dbReference type="PDBsum" id="8ZMS"/>
<dbReference type="PDBsum" id="8ZQE"/>
<dbReference type="PDBsum" id="9BCG"/>
<dbReference type="PDBsum" id="9BDE"/>
<dbReference type="PDBsum" id="9BOI"/>
<dbReference type="PDBsum" id="9CER"/>
<dbReference type="PDBsum" id="9CES"/>
<dbReference type="PDBsum" id="9CET"/>
<dbReference type="PDBsum" id="9CEU"/>
<dbReference type="PDBsum" id="9CEV"/>
<dbReference type="PDBsum" id="9CEW"/>
<dbReference type="PDBsum" id="9CEX"/>
<dbReference type="PDBsum" id="9CEY"/>
<dbReference type="PDBsum" id="9CEZ"/>
<dbReference type="PDBsum" id="9CF0"/>
<dbReference type="PDBsum" id="9CF1"/>
<dbReference type="PDBsum" id="9CF2"/>
<dbReference type="PDBsum" id="9CF3"/>
<dbReference type="PDBsum" id="9CLC"/>
<dbReference type="PDBsum" id="9CLD"/>
<dbReference type="PDBsum" id="9DH3"/>
<dbReference type="PDBsum" id="9HDO"/>
<dbReference type="PDBsum" id="9HDP"/>
<dbReference type="PDBsum" id="9HDQ"/>
<dbReference type="PDBsum" id="9HDR"/>
<dbReference type="BMRB" id="P0AEX9"/>
<dbReference type="EMDB" id="EMD-12665"/>
<dbReference type="EMDB" id="EMD-12700"/>
<dbReference type="EMDB" id="EMD-13159"/>
<dbReference type="EMDB" id="EMD-23916"/>
<dbReference type="EMDB" id="EMD-23917"/>
<dbReference type="EMDB" id="EMD-23918"/>
<dbReference type="EMDB" id="EMD-29857"/>
<dbReference type="EMDB" id="EMD-30650"/>
<dbReference type="EMDB" id="EMD-30652"/>
<dbReference type="EMDB" id="EMD-32091"/>
<dbReference type="EMDB" id="EMD-34871"/>
<dbReference type="EMDB" id="EMD-39117"/>
<dbReference type="SASBDB" id="P0AEX9"/>
<dbReference type="SMR" id="P0AEX9"/>
<dbReference type="BioGRID" id="4263065">
    <property type="interactions" value="25"/>
</dbReference>
<dbReference type="BioGRID" id="852832">
    <property type="interactions" value="2"/>
</dbReference>
<dbReference type="ComplexPortal" id="CPX-1932">
    <property type="entry name" value="Maltose ABC transporter complex"/>
</dbReference>
<dbReference type="DIP" id="DIP-31871N"/>
<dbReference type="FunCoup" id="P0AEX9">
    <property type="interactions" value="352"/>
</dbReference>
<dbReference type="IntAct" id="P0AEX9">
    <property type="interactions" value="10"/>
</dbReference>
<dbReference type="MINT" id="P0AEX9"/>
<dbReference type="STRING" id="511145.b4034"/>
<dbReference type="ChEMBL" id="CHEMBL4295571"/>
<dbReference type="DrugBank" id="DB08227">
    <property type="generic name" value="1-(1-HYDROXY-2,2,6,6-TETRAMETHYLPIPERIDIN-4-YL)PYRROLIDINE-2,5-DIONE"/>
</dbReference>
<dbReference type="DrugBank" id="DB02379">
    <property type="generic name" value="Beta-D-Glucose"/>
</dbReference>
<dbReference type="DrugBank" id="DB03995">
    <property type="generic name" value="Betadex"/>
</dbReference>
<dbReference type="DrugBank" id="DB03323">
    <property type="generic name" value="Maltose"/>
</dbReference>
<dbReference type="DrugBank" id="DB04530">
    <property type="generic name" value="S,S-(2-Hydroxyethyl)Thiocysteine"/>
</dbReference>
<dbReference type="TCDB" id="3.A.1.1.1">
    <property type="family name" value="the atp-binding cassette (abc) superfamily"/>
</dbReference>
<dbReference type="jPOST" id="P0AEX9"/>
<dbReference type="PaxDb" id="511145-b4034"/>
<dbReference type="ABCD" id="P0AEX9">
    <property type="antibodies" value="20 sequenced antibodies"/>
</dbReference>
<dbReference type="EnsemblBacteria" id="AAC77004">
    <property type="protein sequence ID" value="AAC77004"/>
    <property type="gene ID" value="b4034"/>
</dbReference>
<dbReference type="GeneID" id="75204178"/>
<dbReference type="GeneID" id="948538"/>
<dbReference type="KEGG" id="ecj:JW3994"/>
<dbReference type="KEGG" id="eco:b4034"/>
<dbReference type="KEGG" id="ecoc:C3026_21795"/>
<dbReference type="PATRIC" id="fig|1411691.4.peg.2677"/>
<dbReference type="EchoBASE" id="EB0549"/>
<dbReference type="eggNOG" id="COG2182">
    <property type="taxonomic scope" value="Bacteria"/>
</dbReference>
<dbReference type="HOGENOM" id="CLU_031285_17_0_6"/>
<dbReference type="InParanoid" id="P0AEX9"/>
<dbReference type="OMA" id="WAHDWIG"/>
<dbReference type="OrthoDB" id="9766758at2"/>
<dbReference type="PhylomeDB" id="P0AEX9"/>
<dbReference type="BioCyc" id="EcoCyc:MALE-MONOMER"/>
<dbReference type="BioCyc" id="MetaCyc:MALE-MONOMER"/>
<dbReference type="BRENDA" id="7.5.2.1">
    <property type="organism ID" value="2026"/>
</dbReference>
<dbReference type="CD-CODE" id="29DC92C3">
    <property type="entry name" value="Synthetic Condensate 000232"/>
</dbReference>
<dbReference type="CD-CODE" id="7ADEF05E">
    <property type="entry name" value="Synthetic Condensate 000039"/>
</dbReference>
<dbReference type="EvolutionaryTrace" id="P0AEX9"/>
<dbReference type="PRO" id="PR:P0AEX9"/>
<dbReference type="Proteomes" id="UP000000625">
    <property type="component" value="Chromosome"/>
</dbReference>
<dbReference type="GO" id="GO:0043190">
    <property type="term" value="C:ATP-binding cassette (ABC) transporter complex"/>
    <property type="evidence" value="ECO:0000316"/>
    <property type="project" value="EcoliWiki"/>
</dbReference>
<dbReference type="GO" id="GO:0055052">
    <property type="term" value="C:ATP-binding cassette (ABC) transporter complex, substrate-binding subunit-containing"/>
    <property type="evidence" value="ECO:0000316"/>
    <property type="project" value="EcoliWiki"/>
</dbReference>
<dbReference type="GO" id="GO:1990060">
    <property type="term" value="C:maltose transport complex"/>
    <property type="evidence" value="ECO:0000353"/>
    <property type="project" value="ComplexPortal"/>
</dbReference>
<dbReference type="GO" id="GO:0016020">
    <property type="term" value="C:membrane"/>
    <property type="evidence" value="ECO:0000314"/>
    <property type="project" value="ComplexPortal"/>
</dbReference>
<dbReference type="GO" id="GO:0030288">
    <property type="term" value="C:outer membrane-bounded periplasmic space"/>
    <property type="evidence" value="ECO:0000314"/>
    <property type="project" value="EcoCyc"/>
</dbReference>
<dbReference type="GO" id="GO:0042597">
    <property type="term" value="C:periplasmic space"/>
    <property type="evidence" value="ECO:0000314"/>
    <property type="project" value="EcoliWiki"/>
</dbReference>
<dbReference type="GO" id="GO:0015144">
    <property type="term" value="F:carbohydrate transmembrane transporter activity"/>
    <property type="evidence" value="ECO:0007669"/>
    <property type="project" value="InterPro"/>
</dbReference>
<dbReference type="GO" id="GO:1901982">
    <property type="term" value="F:maltose binding"/>
    <property type="evidence" value="ECO:0000314"/>
    <property type="project" value="EcoCyc"/>
</dbReference>
<dbReference type="GO" id="GO:0008643">
    <property type="term" value="P:carbohydrate transport"/>
    <property type="evidence" value="ECO:0000316"/>
    <property type="project" value="EcoliWiki"/>
</dbReference>
<dbReference type="GO" id="GO:0060326">
    <property type="term" value="P:cell chemotaxis"/>
    <property type="evidence" value="ECO:0000315"/>
    <property type="project" value="EcoCyc"/>
</dbReference>
<dbReference type="GO" id="GO:0034289">
    <property type="term" value="P:detection of maltose stimulus"/>
    <property type="evidence" value="ECO:0000315"/>
    <property type="project" value="EcoCyc"/>
</dbReference>
<dbReference type="GO" id="GO:0006974">
    <property type="term" value="P:DNA damage response"/>
    <property type="evidence" value="ECO:0000270"/>
    <property type="project" value="EcoliWiki"/>
</dbReference>
<dbReference type="GO" id="GO:0042956">
    <property type="term" value="P:maltodextrin transmembrane transport"/>
    <property type="evidence" value="ECO:0000314"/>
    <property type="project" value="ComplexPortal"/>
</dbReference>
<dbReference type="GO" id="GO:0015768">
    <property type="term" value="P:maltose transport"/>
    <property type="evidence" value="ECO:0000314"/>
    <property type="project" value="EcoCyc"/>
</dbReference>
<dbReference type="CDD" id="cd13656">
    <property type="entry name" value="PBP2_MBP"/>
    <property type="match status" value="1"/>
</dbReference>
<dbReference type="FunFam" id="3.40.190.10:FF:000032">
    <property type="entry name" value="Maltose/maltodextrin-binding periplasmic protein"/>
    <property type="match status" value="1"/>
</dbReference>
<dbReference type="Gene3D" id="3.40.190.10">
    <property type="entry name" value="Periplasmic binding protein-like II"/>
    <property type="match status" value="2"/>
</dbReference>
<dbReference type="IDEAL" id="IID90020"/>
<dbReference type="InterPro" id="IPR006060">
    <property type="entry name" value="Maltose/Cyclodextrin-bd"/>
</dbReference>
<dbReference type="InterPro" id="IPR006059">
    <property type="entry name" value="SBP"/>
</dbReference>
<dbReference type="InterPro" id="IPR006061">
    <property type="entry name" value="SBP_1_CS"/>
</dbReference>
<dbReference type="NCBIfam" id="NF007011">
    <property type="entry name" value="PRK09474.1"/>
    <property type="match status" value="1"/>
</dbReference>
<dbReference type="PANTHER" id="PTHR30061">
    <property type="entry name" value="MALTOSE-BINDING PERIPLASMIC PROTEIN"/>
    <property type="match status" value="1"/>
</dbReference>
<dbReference type="PANTHER" id="PTHR30061:SF50">
    <property type="entry name" value="MALTOSE_MALTODEXTRIN-BINDING PERIPLASMIC PROTEIN"/>
    <property type="match status" value="1"/>
</dbReference>
<dbReference type="Pfam" id="PF01547">
    <property type="entry name" value="SBP_bac_1"/>
    <property type="match status" value="1"/>
</dbReference>
<dbReference type="PRINTS" id="PR00181">
    <property type="entry name" value="MALTOSEBP"/>
</dbReference>
<dbReference type="SUPFAM" id="SSF53850">
    <property type="entry name" value="Periplasmic binding protein-like II"/>
    <property type="match status" value="1"/>
</dbReference>
<dbReference type="PROSITE" id="PS01037">
    <property type="entry name" value="SBP_BACTERIAL_1"/>
    <property type="match status" value="1"/>
</dbReference>
<evidence type="ECO:0000269" key="1">
    <source>
    </source>
</evidence>
<evidence type="ECO:0000269" key="2">
    <source>
    </source>
</evidence>
<evidence type="ECO:0000269" key="3">
    <source>
    </source>
</evidence>
<evidence type="ECO:0000269" key="4">
    <source>
    </source>
</evidence>
<evidence type="ECO:0000269" key="5">
    <source>
    </source>
</evidence>
<evidence type="ECO:0000269" key="6">
    <source>
    </source>
</evidence>
<evidence type="ECO:0000269" key="7">
    <source>
    </source>
</evidence>
<evidence type="ECO:0000303" key="8">
    <source>
    </source>
</evidence>
<evidence type="ECO:0000303" key="9">
    <source>
    </source>
</evidence>
<evidence type="ECO:0000305" key="10"/>
<evidence type="ECO:0007829" key="11">
    <source>
        <dbReference type="PDB" id="1DMB"/>
    </source>
</evidence>
<evidence type="ECO:0007829" key="12">
    <source>
        <dbReference type="PDB" id="2H25"/>
    </source>
</evidence>
<evidence type="ECO:0007829" key="13">
    <source>
        <dbReference type="PDB" id="2KLF"/>
    </source>
</evidence>
<evidence type="ECO:0007829" key="14">
    <source>
        <dbReference type="PDB" id="2N45"/>
    </source>
</evidence>
<evidence type="ECO:0007829" key="15">
    <source>
        <dbReference type="PDB" id="2ZXT"/>
    </source>
</evidence>
<evidence type="ECO:0007829" key="16">
    <source>
        <dbReference type="PDB" id="3A3C"/>
    </source>
</evidence>
<evidence type="ECO:0007829" key="17">
    <source>
        <dbReference type="PDB" id="3MP6"/>
    </source>
</evidence>
<evidence type="ECO:0007829" key="18">
    <source>
        <dbReference type="PDB" id="3Q27"/>
    </source>
</evidence>
<evidence type="ECO:0007829" key="19">
    <source>
        <dbReference type="PDB" id="4EDQ"/>
    </source>
</evidence>
<evidence type="ECO:0007829" key="20">
    <source>
        <dbReference type="PDB" id="4EXK"/>
    </source>
</evidence>
<evidence type="ECO:0007829" key="21">
    <source>
        <dbReference type="PDB" id="4GIZ"/>
    </source>
</evidence>
<evidence type="ECO:0007829" key="22">
    <source>
        <dbReference type="PDB" id="5E7U"/>
    </source>
</evidence>
<evidence type="ECO:0007829" key="23">
    <source>
        <dbReference type="PDB" id="8C8F"/>
    </source>
</evidence>
<comment type="function">
    <text evidence="2 3 4 5">Part of the ABC transporter complex MalEFGK involved in maltose/maltodextrin import. Binds maltose and higher maltodextrins such as maltotriose.</text>
</comment>
<comment type="biophysicochemical properties">
    <kinetics>
        <KM evidence="5">0.9 uM for maltose</KM>
        <KM evidence="5">2 uM for maltotriose</KM>
    </kinetics>
</comment>
<comment type="subunit">
    <text evidence="2 3">The complex is composed of two ATP-binding proteins (MalK), two transmembrane proteins (MalG and MalF) and a solute-binding protein (MalE).</text>
</comment>
<comment type="interaction">
    <interactant intactId="EBI-369910">
        <id>P0AEX9</id>
    </interactant>
    <interactant intactId="EBI-543750">
        <id>P0A6F5</id>
        <label>groEL</label>
    </interactant>
    <organismsDiffer>false</organismsDiffer>
    <experiments>3</experiments>
</comment>
<comment type="interaction">
    <interactant intactId="EBI-369910">
        <id>P0AEX9</id>
    </interactant>
    <interactant intactId="EBI-1118919">
        <id>P02916</id>
        <label>malF</label>
    </interactant>
    <organismsDiffer>false</organismsDiffer>
    <experiments>5</experiments>
</comment>
<comment type="subcellular location">
    <subcellularLocation>
        <location evidence="4">Periplasm</location>
    </subcellularLocation>
</comment>
<comment type="induction">
    <text evidence="1 4">Induced by maltose and the transcriptional regulator MalT (PubMed:4215651). Permanently repressed by cold shock in a PNPase-dependent fashion (PubMed:14527658).</text>
</comment>
<comment type="similarity">
    <text evidence="10">Belongs to the bacterial solute-binding protein 1 family.</text>
</comment>